<accession>Q9NRD5</accession>
<accession>B3KS52</accession>
<accession>O95906</accession>
<feature type="chain" id="PRO_0000058427" description="PRKCA-binding protein">
    <location>
        <begin position="1"/>
        <end position="415"/>
    </location>
</feature>
<feature type="domain" description="PDZ" evidence="4">
    <location>
        <begin position="22"/>
        <end position="105"/>
    </location>
</feature>
<feature type="domain" description="AH" evidence="5">
    <location>
        <begin position="144"/>
        <end position="357"/>
    </location>
</feature>
<feature type="region of interest" description="Disordered" evidence="6">
    <location>
        <begin position="376"/>
        <end position="415"/>
    </location>
</feature>
<feature type="compositionally biased region" description="Acidic residues" evidence="6">
    <location>
        <begin position="377"/>
        <end position="391"/>
    </location>
</feature>
<feature type="binding site" evidence="1">
    <location>
        <position position="44"/>
    </location>
    <ligand>
        <name>Zn(2+)</name>
        <dbReference type="ChEBI" id="CHEBI:29105"/>
    </ligand>
</feature>
<feature type="binding site" evidence="1">
    <location>
        <position position="46"/>
    </location>
    <ligand>
        <name>Zn(2+)</name>
        <dbReference type="ChEBI" id="CHEBI:29105"/>
    </ligand>
</feature>
<feature type="modified residue" description="Phosphothreonine" evidence="13">
    <location>
        <position position="82"/>
    </location>
</feature>
<feature type="lipid moiety-binding region" description="S-palmitoyl cysteine; by DHHC8" evidence="1">
    <location>
        <position position="413"/>
    </location>
</feature>
<feature type="splice variant" id="VSP_054902" description="In isoform 2." evidence="14">
    <original>ALGEPLYRVSTGNYEYRLILRCRQEARARFSQMRKDVLEKMELLDQKHVQDIVFQLQRLVSTMSKYYNDCYAVLRDADVFPIEVDL</original>
    <variation>VSVGGGGGLVLPPTWSARDSRWLRPTRERPGGLGWTLVPGDLGPSSQSRSLGLGVLGTRPGTTPSVWGTLGGKSDFLHSYEALLSV</variation>
    <location>
        <begin position="279"/>
        <end position="364"/>
    </location>
</feature>
<feature type="splice variant" id="VSP_054903" description="In isoform 2." evidence="14">
    <location>
        <begin position="365"/>
        <end position="415"/>
    </location>
</feature>
<feature type="mutagenesis site" description="Abolishes interaction with other proteins, but not with itself." evidence="7 8 10">
    <original>KD</original>
    <variation>AA</variation>
    <location>
        <begin position="27"/>
        <end position="28"/>
    </location>
</feature>
<feature type="mutagenesis site" description="Abolishes interaction with GRIA2, but not with PRKCA." evidence="11">
    <original>K</original>
    <variation>E</variation>
    <location>
        <position position="27"/>
    </location>
</feature>
<feature type="sequence conflict" description="In Ref. 2; AAF97502." evidence="15" ref="2">
    <original>Y</original>
    <variation>F</variation>
    <location>
        <position position="7"/>
    </location>
</feature>
<feature type="sequence conflict" description="In Ref. 2; AAF97502." evidence="15" ref="2">
    <location>
        <position position="16"/>
    </location>
</feature>
<feature type="sequence conflict" description="In Ref. 2; AAF97502." evidence="15" ref="2">
    <original>N</original>
    <variation>NI</variation>
    <location>
        <position position="236"/>
    </location>
</feature>
<feature type="strand" evidence="16">
    <location>
        <begin position="21"/>
        <end position="26"/>
    </location>
</feature>
<feature type="strand" evidence="16">
    <location>
        <begin position="34"/>
        <end position="39"/>
    </location>
</feature>
<feature type="strand" evidence="16">
    <location>
        <begin position="47"/>
        <end position="52"/>
    </location>
</feature>
<feature type="helix" evidence="16">
    <location>
        <begin position="57"/>
        <end position="61"/>
    </location>
</feature>
<feature type="strand" evidence="16">
    <location>
        <begin position="69"/>
        <end position="73"/>
    </location>
</feature>
<feature type="helix" evidence="16">
    <location>
        <begin position="83"/>
        <end position="92"/>
    </location>
</feature>
<feature type="strand" evidence="16">
    <location>
        <begin position="95"/>
        <end position="102"/>
    </location>
</feature>
<dbReference type="EMBL" id="AB026491">
    <property type="protein sequence ID" value="BAA89294.1"/>
    <property type="molecule type" value="mRNA"/>
</dbReference>
<dbReference type="EMBL" id="AF231710">
    <property type="protein sequence ID" value="AAF97502.1"/>
    <property type="molecule type" value="mRNA"/>
</dbReference>
<dbReference type="EMBL" id="AL049654">
    <property type="protein sequence ID" value="CAB41082.1"/>
    <property type="molecule type" value="mRNA"/>
</dbReference>
<dbReference type="EMBL" id="CR456550">
    <property type="protein sequence ID" value="CAG30436.1"/>
    <property type="molecule type" value="mRNA"/>
</dbReference>
<dbReference type="EMBL" id="AK092818">
    <property type="protein sequence ID" value="BAG52614.1"/>
    <property type="molecule type" value="mRNA"/>
</dbReference>
<dbReference type="EMBL" id="AL031587">
    <property type="status" value="NOT_ANNOTATED_CDS"/>
    <property type="molecule type" value="Genomic_DNA"/>
</dbReference>
<dbReference type="EMBL" id="CH471095">
    <property type="protein sequence ID" value="EAW60208.1"/>
    <property type="molecule type" value="Genomic_DNA"/>
</dbReference>
<dbReference type="EMBL" id="BC017561">
    <property type="protein sequence ID" value="AAH17561.1"/>
    <property type="molecule type" value="mRNA"/>
</dbReference>
<dbReference type="CCDS" id="CCDS13965.1">
    <molecule id="Q9NRD5-1"/>
</dbReference>
<dbReference type="PIR" id="JC7167">
    <property type="entry name" value="JC7167"/>
</dbReference>
<dbReference type="RefSeq" id="NP_001034672.1">
    <molecule id="Q9NRD5-1"/>
    <property type="nucleotide sequence ID" value="NM_001039583.1"/>
</dbReference>
<dbReference type="RefSeq" id="NP_001034673.1">
    <molecule id="Q9NRD5-1"/>
    <property type="nucleotide sequence ID" value="NM_001039584.1"/>
</dbReference>
<dbReference type="RefSeq" id="NP_036539.1">
    <molecule id="Q9NRD5-1"/>
    <property type="nucleotide sequence ID" value="NM_012407.4"/>
</dbReference>
<dbReference type="PDB" id="2GZV">
    <property type="method" value="X-ray"/>
    <property type="resolution" value="1.12 A"/>
    <property type="chains" value="A=19-105"/>
</dbReference>
<dbReference type="PDB" id="6AR4">
    <property type="method" value="X-ray"/>
    <property type="resolution" value="1.69 A"/>
    <property type="chains" value="A/B=1-105"/>
</dbReference>
<dbReference type="PDB" id="6BJN">
    <property type="method" value="X-ray"/>
    <property type="resolution" value="2.43 A"/>
    <property type="chains" value="A/B=1-105"/>
</dbReference>
<dbReference type="PDB" id="6BJO">
    <property type="method" value="X-ray"/>
    <property type="resolution" value="1.75 A"/>
    <property type="chains" value="A/B=1-105"/>
</dbReference>
<dbReference type="PDBsum" id="2GZV"/>
<dbReference type="PDBsum" id="6AR4"/>
<dbReference type="PDBsum" id="6BJN"/>
<dbReference type="PDBsum" id="6BJO"/>
<dbReference type="SASBDB" id="Q9NRD5"/>
<dbReference type="SMR" id="Q9NRD5"/>
<dbReference type="BioGRID" id="114849">
    <property type="interactions" value="492"/>
</dbReference>
<dbReference type="CORUM" id="Q9NRD5"/>
<dbReference type="FunCoup" id="Q9NRD5">
    <property type="interactions" value="568"/>
</dbReference>
<dbReference type="IntAct" id="Q9NRD5">
    <property type="interactions" value="457"/>
</dbReference>
<dbReference type="MINT" id="Q9NRD5"/>
<dbReference type="STRING" id="9606.ENSP00000385205"/>
<dbReference type="MoonDB" id="Q9NRD5">
    <property type="type" value="Predicted"/>
</dbReference>
<dbReference type="iPTMnet" id="Q9NRD5"/>
<dbReference type="PhosphoSitePlus" id="Q9NRD5"/>
<dbReference type="SwissPalm" id="Q9NRD5"/>
<dbReference type="BioMuta" id="PICK1"/>
<dbReference type="DMDM" id="22095990"/>
<dbReference type="jPOST" id="Q9NRD5"/>
<dbReference type="MassIVE" id="Q9NRD5"/>
<dbReference type="PaxDb" id="9606-ENSP00000385205"/>
<dbReference type="PeptideAtlas" id="Q9NRD5"/>
<dbReference type="ProteomicsDB" id="82339">
    <molecule id="Q9NRD5-1"/>
</dbReference>
<dbReference type="Pumba" id="Q9NRD5"/>
<dbReference type="ABCD" id="Q9NRD5">
    <property type="antibodies" value="1 sequenced antibody"/>
</dbReference>
<dbReference type="Antibodypedia" id="12276">
    <property type="antibodies" value="471 antibodies from 41 providers"/>
</dbReference>
<dbReference type="DNASU" id="9463"/>
<dbReference type="Ensembl" id="ENST00000356976.8">
    <molecule id="Q9NRD5-1"/>
    <property type="protein sequence ID" value="ENSP00000349465.3"/>
    <property type="gene ID" value="ENSG00000100151.16"/>
</dbReference>
<dbReference type="Ensembl" id="ENST00000404072.7">
    <molecule id="Q9NRD5-1"/>
    <property type="protein sequence ID" value="ENSP00000385205.3"/>
    <property type="gene ID" value="ENSG00000100151.16"/>
</dbReference>
<dbReference type="GeneID" id="9463"/>
<dbReference type="KEGG" id="hsa:9463"/>
<dbReference type="MANE-Select" id="ENST00000356976.8">
    <property type="protein sequence ID" value="ENSP00000349465.3"/>
    <property type="RefSeq nucleotide sequence ID" value="NM_012407.4"/>
    <property type="RefSeq protein sequence ID" value="NP_036539.1"/>
</dbReference>
<dbReference type="UCSC" id="uc003auq.4">
    <molecule id="Q9NRD5-1"/>
    <property type="organism name" value="human"/>
</dbReference>
<dbReference type="AGR" id="HGNC:9394"/>
<dbReference type="CTD" id="9463"/>
<dbReference type="DisGeNET" id="9463"/>
<dbReference type="GeneCards" id="PICK1"/>
<dbReference type="HGNC" id="HGNC:9394">
    <property type="gene designation" value="PICK1"/>
</dbReference>
<dbReference type="HPA" id="ENSG00000100151">
    <property type="expression patterns" value="Low tissue specificity"/>
</dbReference>
<dbReference type="MalaCards" id="PICK1"/>
<dbReference type="MIM" id="605926">
    <property type="type" value="gene"/>
</dbReference>
<dbReference type="neXtProt" id="NX_Q9NRD5"/>
<dbReference type="OpenTargets" id="ENSG00000100151"/>
<dbReference type="Orphanet" id="171709">
    <property type="disease" value="Male infertility due to globozoospermia"/>
</dbReference>
<dbReference type="PharmGKB" id="PA33760"/>
<dbReference type="VEuPathDB" id="HostDB:ENSG00000100151"/>
<dbReference type="eggNOG" id="KOG3651">
    <property type="taxonomic scope" value="Eukaryota"/>
</dbReference>
<dbReference type="GeneTree" id="ENSGT00950000183040"/>
<dbReference type="HOGENOM" id="CLU_032347_1_0_1"/>
<dbReference type="InParanoid" id="Q9NRD5"/>
<dbReference type="OMA" id="QDEYMDG"/>
<dbReference type="OrthoDB" id="5917245at2759"/>
<dbReference type="PAN-GO" id="Q9NRD5">
    <property type="GO annotations" value="12 GO annotations based on evolutionary models"/>
</dbReference>
<dbReference type="PhylomeDB" id="Q9NRD5"/>
<dbReference type="TreeFam" id="TF314945"/>
<dbReference type="PathwayCommons" id="Q9NRD5"/>
<dbReference type="Reactome" id="R-HSA-202733">
    <property type="pathway name" value="Cell surface interactions at the vascular wall"/>
</dbReference>
<dbReference type="Reactome" id="R-HSA-416993">
    <property type="pathway name" value="Trafficking of GluR2-containing AMPA receptors"/>
</dbReference>
<dbReference type="SignaLink" id="Q9NRD5"/>
<dbReference type="SIGNOR" id="Q9NRD5"/>
<dbReference type="BioGRID-ORCS" id="9463">
    <property type="hits" value="10 hits in 1163 CRISPR screens"/>
</dbReference>
<dbReference type="ChiTaRS" id="PICK1">
    <property type="organism name" value="human"/>
</dbReference>
<dbReference type="EvolutionaryTrace" id="Q9NRD5"/>
<dbReference type="GeneWiki" id="PICK1"/>
<dbReference type="GenomeRNAi" id="9463"/>
<dbReference type="Pharos" id="Q9NRD5">
    <property type="development level" value="Tbio"/>
</dbReference>
<dbReference type="PRO" id="PR:Q9NRD5"/>
<dbReference type="Proteomes" id="UP000005640">
    <property type="component" value="Chromosome 22"/>
</dbReference>
<dbReference type="RNAct" id="Q9NRD5">
    <property type="molecule type" value="protein"/>
</dbReference>
<dbReference type="Bgee" id="ENSG00000100151">
    <property type="expression patterns" value="Expressed in adenohypophysis and 128 other cell types or tissues"/>
</dbReference>
<dbReference type="ExpressionAtlas" id="Q9NRD5">
    <property type="expression patterns" value="baseline and differential"/>
</dbReference>
<dbReference type="GO" id="GO:0005737">
    <property type="term" value="C:cytoplasm"/>
    <property type="evidence" value="ECO:0000314"/>
    <property type="project" value="UniProtKB"/>
</dbReference>
<dbReference type="GO" id="GO:0005856">
    <property type="term" value="C:cytoskeleton"/>
    <property type="evidence" value="ECO:0007669"/>
    <property type="project" value="UniProtKB-SubCell"/>
</dbReference>
<dbReference type="GO" id="GO:0005829">
    <property type="term" value="C:cytosol"/>
    <property type="evidence" value="ECO:0000314"/>
    <property type="project" value="HPA"/>
</dbReference>
<dbReference type="GO" id="GO:0030666">
    <property type="term" value="C:endocytic vesicle membrane"/>
    <property type="evidence" value="ECO:0000304"/>
    <property type="project" value="Reactome"/>
</dbReference>
<dbReference type="GO" id="GO:0005794">
    <property type="term" value="C:Golgi apparatus"/>
    <property type="evidence" value="ECO:0000250"/>
    <property type="project" value="UniProtKB"/>
</dbReference>
<dbReference type="GO" id="GO:0043005">
    <property type="term" value="C:neuron projection"/>
    <property type="evidence" value="ECO:0000250"/>
    <property type="project" value="UniProtKB"/>
</dbReference>
<dbReference type="GO" id="GO:0048471">
    <property type="term" value="C:perinuclear region of cytoplasm"/>
    <property type="evidence" value="ECO:0000250"/>
    <property type="project" value="UniProtKB"/>
</dbReference>
<dbReference type="GO" id="GO:0005886">
    <property type="term" value="C:plasma membrane"/>
    <property type="evidence" value="ECO:0000314"/>
    <property type="project" value="UniProtKB"/>
</dbReference>
<dbReference type="GO" id="GO:0014069">
    <property type="term" value="C:postsynaptic density"/>
    <property type="evidence" value="ECO:0000318"/>
    <property type="project" value="GO_Central"/>
</dbReference>
<dbReference type="GO" id="GO:0042734">
    <property type="term" value="C:presynaptic membrane"/>
    <property type="evidence" value="ECO:0000314"/>
    <property type="project" value="UniProtKB"/>
</dbReference>
<dbReference type="GO" id="GO:0045202">
    <property type="term" value="C:synapse"/>
    <property type="evidence" value="ECO:0000250"/>
    <property type="project" value="UniProtKB"/>
</dbReference>
<dbReference type="GO" id="GO:0008021">
    <property type="term" value="C:synaptic vesicle"/>
    <property type="evidence" value="ECO:0000318"/>
    <property type="project" value="GO_Central"/>
</dbReference>
<dbReference type="GO" id="GO:0032588">
    <property type="term" value="C:trans-Golgi network membrane"/>
    <property type="evidence" value="ECO:0000318"/>
    <property type="project" value="GO_Central"/>
</dbReference>
<dbReference type="GO" id="GO:0051015">
    <property type="term" value="F:actin filament binding"/>
    <property type="evidence" value="ECO:0000250"/>
    <property type="project" value="UniProtKB"/>
</dbReference>
<dbReference type="GO" id="GO:0071933">
    <property type="term" value="F:Arp2/3 complex binding"/>
    <property type="evidence" value="ECO:0000250"/>
    <property type="project" value="UniProtKB"/>
</dbReference>
<dbReference type="GO" id="GO:0001664">
    <property type="term" value="F:G protein-coupled receptor binding"/>
    <property type="evidence" value="ECO:0000250"/>
    <property type="project" value="ParkinsonsUK-UCL"/>
</dbReference>
<dbReference type="GO" id="GO:0042802">
    <property type="term" value="F:identical protein binding"/>
    <property type="evidence" value="ECO:0000353"/>
    <property type="project" value="IntAct"/>
</dbReference>
<dbReference type="GO" id="GO:0140090">
    <property type="term" value="F:membrane curvature sensor activity"/>
    <property type="evidence" value="ECO:0000314"/>
    <property type="project" value="FlyBase"/>
</dbReference>
<dbReference type="GO" id="GO:0046872">
    <property type="term" value="F:metal ion binding"/>
    <property type="evidence" value="ECO:0007669"/>
    <property type="project" value="UniProtKB-KW"/>
</dbReference>
<dbReference type="GO" id="GO:0005543">
    <property type="term" value="F:phospholipid binding"/>
    <property type="evidence" value="ECO:0000318"/>
    <property type="project" value="GO_Central"/>
</dbReference>
<dbReference type="GO" id="GO:0019904">
    <property type="term" value="F:protein domain specific binding"/>
    <property type="evidence" value="ECO:0000250"/>
    <property type="project" value="ParkinsonsUK-UCL"/>
</dbReference>
<dbReference type="GO" id="GO:0005080">
    <property type="term" value="F:protein kinase C binding"/>
    <property type="evidence" value="ECO:0000250"/>
    <property type="project" value="UniProtKB"/>
</dbReference>
<dbReference type="GO" id="GO:0005102">
    <property type="term" value="F:signaling receptor binding"/>
    <property type="evidence" value="ECO:0000250"/>
    <property type="project" value="UniProtKB"/>
</dbReference>
<dbReference type="GO" id="GO:0036294">
    <property type="term" value="P:cellular response to decreased oxygen levels"/>
    <property type="evidence" value="ECO:0000250"/>
    <property type="project" value="UniProtKB"/>
</dbReference>
<dbReference type="GO" id="GO:0042149">
    <property type="term" value="P:cellular response to glucose starvation"/>
    <property type="evidence" value="ECO:0000250"/>
    <property type="project" value="UniProtKB"/>
</dbReference>
<dbReference type="GO" id="GO:0097062">
    <property type="term" value="P:dendritic spine maintenance"/>
    <property type="evidence" value="ECO:0000250"/>
    <property type="project" value="UniProtKB"/>
</dbReference>
<dbReference type="GO" id="GO:0097061">
    <property type="term" value="P:dendritic spine organization"/>
    <property type="evidence" value="ECO:0000250"/>
    <property type="project" value="UniProtKB"/>
</dbReference>
<dbReference type="GO" id="GO:0021782">
    <property type="term" value="P:glial cell development"/>
    <property type="evidence" value="ECO:0000250"/>
    <property type="project" value="UniProtKB"/>
</dbReference>
<dbReference type="GO" id="GO:0006886">
    <property type="term" value="P:intracellular protein transport"/>
    <property type="evidence" value="ECO:0000318"/>
    <property type="project" value="GO_Central"/>
</dbReference>
<dbReference type="GO" id="GO:0060292">
    <property type="term" value="P:long-term synaptic depression"/>
    <property type="evidence" value="ECO:0000250"/>
    <property type="project" value="UniProtKB"/>
</dbReference>
<dbReference type="GO" id="GO:0015844">
    <property type="term" value="P:monoamine transport"/>
    <property type="evidence" value="ECO:0000314"/>
    <property type="project" value="UniProtKB"/>
</dbReference>
<dbReference type="GO" id="GO:0034316">
    <property type="term" value="P:negative regulation of Arp2/3 complex-mediated actin nucleation"/>
    <property type="evidence" value="ECO:0000250"/>
    <property type="project" value="UniProtKB"/>
</dbReference>
<dbReference type="GO" id="GO:0045161">
    <property type="term" value="P:neuronal ion channel clustering"/>
    <property type="evidence" value="ECO:0000304"/>
    <property type="project" value="UniProtKB"/>
</dbReference>
<dbReference type="GO" id="GO:0002092">
    <property type="term" value="P:positive regulation of receptor internalization"/>
    <property type="evidence" value="ECO:0000250"/>
    <property type="project" value="UniProtKB"/>
</dbReference>
<dbReference type="GO" id="GO:0006468">
    <property type="term" value="P:protein phosphorylation"/>
    <property type="evidence" value="ECO:0000250"/>
    <property type="project" value="UniProtKB"/>
</dbReference>
<dbReference type="GO" id="GO:0043113">
    <property type="term" value="P:receptor clustering"/>
    <property type="evidence" value="ECO:0000250"/>
    <property type="project" value="UniProtKB"/>
</dbReference>
<dbReference type="GO" id="GO:0034315">
    <property type="term" value="P:regulation of Arp2/3 complex-mediated actin nucleation"/>
    <property type="evidence" value="ECO:0000318"/>
    <property type="project" value="GO_Central"/>
</dbReference>
<dbReference type="GO" id="GO:0050796">
    <property type="term" value="P:regulation of insulin secretion"/>
    <property type="evidence" value="ECO:0000315"/>
    <property type="project" value="FlyBase"/>
</dbReference>
<dbReference type="CDD" id="cd07659">
    <property type="entry name" value="BAR_PICK1"/>
    <property type="match status" value="1"/>
</dbReference>
<dbReference type="CDD" id="cd06722">
    <property type="entry name" value="PDZ_PICK1-like"/>
    <property type="match status" value="1"/>
</dbReference>
<dbReference type="FunFam" id="1.20.1270.60:FF:000023">
    <property type="entry name" value="Interacting with PRKCA"/>
    <property type="match status" value="1"/>
</dbReference>
<dbReference type="FunFam" id="2.30.42.10:FF:000073">
    <property type="entry name" value="Interacting with PRKCA"/>
    <property type="match status" value="1"/>
</dbReference>
<dbReference type="Gene3D" id="2.30.42.10">
    <property type="match status" value="1"/>
</dbReference>
<dbReference type="Gene3D" id="1.20.1270.60">
    <property type="entry name" value="Arfaptin homology (AH) domain/BAR domain"/>
    <property type="match status" value="1"/>
</dbReference>
<dbReference type="InterPro" id="IPR027267">
    <property type="entry name" value="AH/BAR_dom_sf"/>
</dbReference>
<dbReference type="InterPro" id="IPR010504">
    <property type="entry name" value="AH_dom"/>
</dbReference>
<dbReference type="InterPro" id="IPR030798">
    <property type="entry name" value="Arfaptin_fam"/>
</dbReference>
<dbReference type="InterPro" id="IPR001478">
    <property type="entry name" value="PDZ"/>
</dbReference>
<dbReference type="InterPro" id="IPR036034">
    <property type="entry name" value="PDZ_sf"/>
</dbReference>
<dbReference type="InterPro" id="IPR037959">
    <property type="entry name" value="PICK1_BAR"/>
</dbReference>
<dbReference type="PANTHER" id="PTHR12141">
    <property type="entry name" value="ARFAPTIN-RELATED"/>
    <property type="match status" value="1"/>
</dbReference>
<dbReference type="PANTHER" id="PTHR12141:SF1">
    <property type="entry name" value="PRKCA-BINDING PROTEIN"/>
    <property type="match status" value="1"/>
</dbReference>
<dbReference type="Pfam" id="PF06456">
    <property type="entry name" value="Arfaptin"/>
    <property type="match status" value="1"/>
</dbReference>
<dbReference type="Pfam" id="PF00595">
    <property type="entry name" value="PDZ"/>
    <property type="match status" value="1"/>
</dbReference>
<dbReference type="SMART" id="SM01015">
    <property type="entry name" value="Arfaptin"/>
    <property type="match status" value="1"/>
</dbReference>
<dbReference type="SMART" id="SM00228">
    <property type="entry name" value="PDZ"/>
    <property type="match status" value="1"/>
</dbReference>
<dbReference type="SUPFAM" id="SSF103657">
    <property type="entry name" value="BAR/IMD domain-like"/>
    <property type="match status" value="1"/>
</dbReference>
<dbReference type="SUPFAM" id="SSF50156">
    <property type="entry name" value="PDZ domain-like"/>
    <property type="match status" value="1"/>
</dbReference>
<dbReference type="PROSITE" id="PS50870">
    <property type="entry name" value="AH"/>
    <property type="match status" value="1"/>
</dbReference>
<dbReference type="PROSITE" id="PS50106">
    <property type="entry name" value="PDZ"/>
    <property type="match status" value="1"/>
</dbReference>
<name>PICK1_HUMAN</name>
<proteinExistence type="evidence at protein level"/>
<protein>
    <recommendedName>
        <fullName>PRKCA-binding protein</fullName>
    </recommendedName>
    <alternativeName>
        <fullName>Protein interacting with C kinase 1</fullName>
    </alternativeName>
    <alternativeName>
        <fullName>Protein kinase C-alpha-binding protein</fullName>
    </alternativeName>
</protein>
<keyword id="KW-0002">3D-structure</keyword>
<keyword id="KW-0009">Actin-binding</keyword>
<keyword id="KW-0025">Alternative splicing</keyword>
<keyword id="KW-0106">Calcium</keyword>
<keyword id="KW-0963">Cytoplasm</keyword>
<keyword id="KW-0206">Cytoskeleton</keyword>
<keyword id="KW-0449">Lipoprotein</keyword>
<keyword id="KW-0472">Membrane</keyword>
<keyword id="KW-0479">Metal-binding</keyword>
<keyword id="KW-0564">Palmitate</keyword>
<keyword id="KW-0597">Phosphoprotein</keyword>
<keyword id="KW-1267">Proteomics identification</keyword>
<keyword id="KW-1185">Reference proteome</keyword>
<keyword id="KW-0770">Synapse</keyword>
<keyword id="KW-0771">Synaptosome</keyword>
<keyword id="KW-0862">Zinc</keyword>
<reference key="1">
    <citation type="journal article" date="2000" name="Biochem. Biophys. Res. Commun.">
        <title>Interaction of the PDZ domain of human PICK1 with class I ADP-ribosylation factors.</title>
        <authorList>
            <person name="Takeya R."/>
            <person name="Takeshige K."/>
            <person name="Sumimoto H."/>
        </authorList>
    </citation>
    <scope>NUCLEOTIDE SEQUENCE [MRNA] (ISOFORM 1)</scope>
    <scope>INTERACTION WITH ARF1 AND ARF3</scope>
    <scope>MUTAGENESIS OF 27-LYS-ASP-28</scope>
    <source>
        <tissue>B-cell</tissue>
    </source>
</reference>
<reference key="2">
    <citation type="submission" date="2000-02" db="EMBL/GenBank/DDBJ databases">
        <title>Protein kinases interacting with the human PICK1 protein.</title>
        <authorList>
            <person name="Zhu X."/>
            <person name="Chung I."/>
            <person name="Scholl P.R."/>
        </authorList>
    </citation>
    <scope>NUCLEOTIDE SEQUENCE [MRNA] (ISOFORM 1)</scope>
</reference>
<reference key="3">
    <citation type="journal article" date="2003" name="Genome Res.">
        <title>Reevaluating human gene annotation: a second-generation analysis of chromosome 22.</title>
        <authorList>
            <person name="Collins J.E."/>
            <person name="Goward M.E."/>
            <person name="Cole C.G."/>
            <person name="Smink L.J."/>
            <person name="Huckle E.J."/>
            <person name="Knowles S."/>
            <person name="Bye J.M."/>
            <person name="Beare D.M."/>
            <person name="Dunham I."/>
        </authorList>
    </citation>
    <scope>NUCLEOTIDE SEQUENCE [LARGE SCALE MRNA] (ISOFORM 1)</scope>
</reference>
<reference key="4">
    <citation type="journal article" date="2004" name="Genome Biol.">
        <title>A genome annotation-driven approach to cloning the human ORFeome.</title>
        <authorList>
            <person name="Collins J.E."/>
            <person name="Wright C.L."/>
            <person name="Edwards C.A."/>
            <person name="Davis M.P."/>
            <person name="Grinham J.A."/>
            <person name="Cole C.G."/>
            <person name="Goward M.E."/>
            <person name="Aguado B."/>
            <person name="Mallya M."/>
            <person name="Mokrab Y."/>
            <person name="Huckle E.J."/>
            <person name="Beare D.M."/>
            <person name="Dunham I."/>
        </authorList>
    </citation>
    <scope>NUCLEOTIDE SEQUENCE [LARGE SCALE MRNA] (ISOFORM 1)</scope>
</reference>
<reference key="5">
    <citation type="journal article" date="2004" name="Nat. Genet.">
        <title>Complete sequencing and characterization of 21,243 full-length human cDNAs.</title>
        <authorList>
            <person name="Ota T."/>
            <person name="Suzuki Y."/>
            <person name="Nishikawa T."/>
            <person name="Otsuki T."/>
            <person name="Sugiyama T."/>
            <person name="Irie R."/>
            <person name="Wakamatsu A."/>
            <person name="Hayashi K."/>
            <person name="Sato H."/>
            <person name="Nagai K."/>
            <person name="Kimura K."/>
            <person name="Makita H."/>
            <person name="Sekine M."/>
            <person name="Obayashi M."/>
            <person name="Nishi T."/>
            <person name="Shibahara T."/>
            <person name="Tanaka T."/>
            <person name="Ishii S."/>
            <person name="Yamamoto J."/>
            <person name="Saito K."/>
            <person name="Kawai Y."/>
            <person name="Isono Y."/>
            <person name="Nakamura Y."/>
            <person name="Nagahari K."/>
            <person name="Murakami K."/>
            <person name="Yasuda T."/>
            <person name="Iwayanagi T."/>
            <person name="Wagatsuma M."/>
            <person name="Shiratori A."/>
            <person name="Sudo H."/>
            <person name="Hosoiri T."/>
            <person name="Kaku Y."/>
            <person name="Kodaira H."/>
            <person name="Kondo H."/>
            <person name="Sugawara M."/>
            <person name="Takahashi M."/>
            <person name="Kanda K."/>
            <person name="Yokoi T."/>
            <person name="Furuya T."/>
            <person name="Kikkawa E."/>
            <person name="Omura Y."/>
            <person name="Abe K."/>
            <person name="Kamihara K."/>
            <person name="Katsuta N."/>
            <person name="Sato K."/>
            <person name="Tanikawa M."/>
            <person name="Yamazaki M."/>
            <person name="Ninomiya K."/>
            <person name="Ishibashi T."/>
            <person name="Yamashita H."/>
            <person name="Murakawa K."/>
            <person name="Fujimori K."/>
            <person name="Tanai H."/>
            <person name="Kimata M."/>
            <person name="Watanabe M."/>
            <person name="Hiraoka S."/>
            <person name="Chiba Y."/>
            <person name="Ishida S."/>
            <person name="Ono Y."/>
            <person name="Takiguchi S."/>
            <person name="Watanabe S."/>
            <person name="Yosida M."/>
            <person name="Hotuta T."/>
            <person name="Kusano J."/>
            <person name="Kanehori K."/>
            <person name="Takahashi-Fujii A."/>
            <person name="Hara H."/>
            <person name="Tanase T.-O."/>
            <person name="Nomura Y."/>
            <person name="Togiya S."/>
            <person name="Komai F."/>
            <person name="Hara R."/>
            <person name="Takeuchi K."/>
            <person name="Arita M."/>
            <person name="Imose N."/>
            <person name="Musashino K."/>
            <person name="Yuuki H."/>
            <person name="Oshima A."/>
            <person name="Sasaki N."/>
            <person name="Aotsuka S."/>
            <person name="Yoshikawa Y."/>
            <person name="Matsunawa H."/>
            <person name="Ichihara T."/>
            <person name="Shiohata N."/>
            <person name="Sano S."/>
            <person name="Moriya S."/>
            <person name="Momiyama H."/>
            <person name="Satoh N."/>
            <person name="Takami S."/>
            <person name="Terashima Y."/>
            <person name="Suzuki O."/>
            <person name="Nakagawa S."/>
            <person name="Senoh A."/>
            <person name="Mizoguchi H."/>
            <person name="Goto Y."/>
            <person name="Shimizu F."/>
            <person name="Wakebe H."/>
            <person name="Hishigaki H."/>
            <person name="Watanabe T."/>
            <person name="Sugiyama A."/>
            <person name="Takemoto M."/>
            <person name="Kawakami B."/>
            <person name="Yamazaki M."/>
            <person name="Watanabe K."/>
            <person name="Kumagai A."/>
            <person name="Itakura S."/>
            <person name="Fukuzumi Y."/>
            <person name="Fujimori Y."/>
            <person name="Komiyama M."/>
            <person name="Tashiro H."/>
            <person name="Tanigami A."/>
            <person name="Fujiwara T."/>
            <person name="Ono T."/>
            <person name="Yamada K."/>
            <person name="Fujii Y."/>
            <person name="Ozaki K."/>
            <person name="Hirao M."/>
            <person name="Ohmori Y."/>
            <person name="Kawabata A."/>
            <person name="Hikiji T."/>
            <person name="Kobatake N."/>
            <person name="Inagaki H."/>
            <person name="Ikema Y."/>
            <person name="Okamoto S."/>
            <person name="Okitani R."/>
            <person name="Kawakami T."/>
            <person name="Noguchi S."/>
            <person name="Itoh T."/>
            <person name="Shigeta K."/>
            <person name="Senba T."/>
            <person name="Matsumura K."/>
            <person name="Nakajima Y."/>
            <person name="Mizuno T."/>
            <person name="Morinaga M."/>
            <person name="Sasaki M."/>
            <person name="Togashi T."/>
            <person name="Oyama M."/>
            <person name="Hata H."/>
            <person name="Watanabe M."/>
            <person name="Komatsu T."/>
            <person name="Mizushima-Sugano J."/>
            <person name="Satoh T."/>
            <person name="Shirai Y."/>
            <person name="Takahashi Y."/>
            <person name="Nakagawa K."/>
            <person name="Okumura K."/>
            <person name="Nagase T."/>
            <person name="Nomura N."/>
            <person name="Kikuchi H."/>
            <person name="Masuho Y."/>
            <person name="Yamashita R."/>
            <person name="Nakai K."/>
            <person name="Yada T."/>
            <person name="Nakamura Y."/>
            <person name="Ohara O."/>
            <person name="Isogai T."/>
            <person name="Sugano S."/>
        </authorList>
    </citation>
    <scope>NUCLEOTIDE SEQUENCE [LARGE SCALE MRNA] (ISOFORM 2)</scope>
    <source>
        <tissue>Small intestine</tissue>
    </source>
</reference>
<reference key="6">
    <citation type="journal article" date="1999" name="Nature">
        <title>The DNA sequence of human chromosome 22.</title>
        <authorList>
            <person name="Dunham I."/>
            <person name="Hunt A.R."/>
            <person name="Collins J.E."/>
            <person name="Bruskiewich R."/>
            <person name="Beare D.M."/>
            <person name="Clamp M."/>
            <person name="Smink L.J."/>
            <person name="Ainscough R."/>
            <person name="Almeida J.P."/>
            <person name="Babbage A.K."/>
            <person name="Bagguley C."/>
            <person name="Bailey J."/>
            <person name="Barlow K.F."/>
            <person name="Bates K.N."/>
            <person name="Beasley O.P."/>
            <person name="Bird C.P."/>
            <person name="Blakey S.E."/>
            <person name="Bridgeman A.M."/>
            <person name="Buck D."/>
            <person name="Burgess J."/>
            <person name="Burrill W.D."/>
            <person name="Burton J."/>
            <person name="Carder C."/>
            <person name="Carter N.P."/>
            <person name="Chen Y."/>
            <person name="Clark G."/>
            <person name="Clegg S.M."/>
            <person name="Cobley V.E."/>
            <person name="Cole C.G."/>
            <person name="Collier R.E."/>
            <person name="Connor R."/>
            <person name="Conroy D."/>
            <person name="Corby N.R."/>
            <person name="Coville G.J."/>
            <person name="Cox A.V."/>
            <person name="Davis J."/>
            <person name="Dawson E."/>
            <person name="Dhami P.D."/>
            <person name="Dockree C."/>
            <person name="Dodsworth S.J."/>
            <person name="Durbin R.M."/>
            <person name="Ellington A.G."/>
            <person name="Evans K.L."/>
            <person name="Fey J.M."/>
            <person name="Fleming K."/>
            <person name="French L."/>
            <person name="Garner A.A."/>
            <person name="Gilbert J.G.R."/>
            <person name="Goward M.E."/>
            <person name="Grafham D.V."/>
            <person name="Griffiths M.N.D."/>
            <person name="Hall C."/>
            <person name="Hall R.E."/>
            <person name="Hall-Tamlyn G."/>
            <person name="Heathcott R.W."/>
            <person name="Ho S."/>
            <person name="Holmes S."/>
            <person name="Hunt S.E."/>
            <person name="Jones M.C."/>
            <person name="Kershaw J."/>
            <person name="Kimberley A.M."/>
            <person name="King A."/>
            <person name="Laird G.K."/>
            <person name="Langford C.F."/>
            <person name="Leversha M.A."/>
            <person name="Lloyd C."/>
            <person name="Lloyd D.M."/>
            <person name="Martyn I.D."/>
            <person name="Mashreghi-Mohammadi M."/>
            <person name="Matthews L.H."/>
            <person name="Mccann O.T."/>
            <person name="Mcclay J."/>
            <person name="Mclaren S."/>
            <person name="McMurray A.A."/>
            <person name="Milne S.A."/>
            <person name="Mortimore B.J."/>
            <person name="Odell C.N."/>
            <person name="Pavitt R."/>
            <person name="Pearce A.V."/>
            <person name="Pearson D."/>
            <person name="Phillimore B.J.C.T."/>
            <person name="Phillips S.H."/>
            <person name="Plumb R.W."/>
            <person name="Ramsay H."/>
            <person name="Ramsey Y."/>
            <person name="Rogers L."/>
            <person name="Ross M.T."/>
            <person name="Scott C.E."/>
            <person name="Sehra H.K."/>
            <person name="Skuce C.D."/>
            <person name="Smalley S."/>
            <person name="Smith M.L."/>
            <person name="Soderlund C."/>
            <person name="Spragon L."/>
            <person name="Steward C.A."/>
            <person name="Sulston J.E."/>
            <person name="Swann R.M."/>
            <person name="Vaudin M."/>
            <person name="Wall M."/>
            <person name="Wallis J.M."/>
            <person name="Whiteley M.N."/>
            <person name="Willey D.L."/>
            <person name="Williams L."/>
            <person name="Williams S.A."/>
            <person name="Williamson H."/>
            <person name="Wilmer T.E."/>
            <person name="Wilming L."/>
            <person name="Wright C.L."/>
            <person name="Hubbard T."/>
            <person name="Bentley D.R."/>
            <person name="Beck S."/>
            <person name="Rogers J."/>
            <person name="Shimizu N."/>
            <person name="Minoshima S."/>
            <person name="Kawasaki K."/>
            <person name="Sasaki T."/>
            <person name="Asakawa S."/>
            <person name="Kudoh J."/>
            <person name="Shintani A."/>
            <person name="Shibuya K."/>
            <person name="Yoshizaki Y."/>
            <person name="Aoki N."/>
            <person name="Mitsuyama S."/>
            <person name="Roe B.A."/>
            <person name="Chen F."/>
            <person name="Chu L."/>
            <person name="Crabtree J."/>
            <person name="Deschamps S."/>
            <person name="Do A."/>
            <person name="Do T."/>
            <person name="Dorman A."/>
            <person name="Fang F."/>
            <person name="Fu Y."/>
            <person name="Hu P."/>
            <person name="Hua A."/>
            <person name="Kenton S."/>
            <person name="Lai H."/>
            <person name="Lao H.I."/>
            <person name="Lewis J."/>
            <person name="Lewis S."/>
            <person name="Lin S.-P."/>
            <person name="Loh P."/>
            <person name="Malaj E."/>
            <person name="Nguyen T."/>
            <person name="Pan H."/>
            <person name="Phan S."/>
            <person name="Qi S."/>
            <person name="Qian Y."/>
            <person name="Ray L."/>
            <person name="Ren Q."/>
            <person name="Shaull S."/>
            <person name="Sloan D."/>
            <person name="Song L."/>
            <person name="Wang Q."/>
            <person name="Wang Y."/>
            <person name="Wang Z."/>
            <person name="White J."/>
            <person name="Willingham D."/>
            <person name="Wu H."/>
            <person name="Yao Z."/>
            <person name="Zhan M."/>
            <person name="Zhang G."/>
            <person name="Chissoe S."/>
            <person name="Murray J."/>
            <person name="Miller N."/>
            <person name="Minx P."/>
            <person name="Fulton R."/>
            <person name="Johnson D."/>
            <person name="Bemis G."/>
            <person name="Bentley D."/>
            <person name="Bradshaw H."/>
            <person name="Bourne S."/>
            <person name="Cordes M."/>
            <person name="Du Z."/>
            <person name="Fulton L."/>
            <person name="Goela D."/>
            <person name="Graves T."/>
            <person name="Hawkins J."/>
            <person name="Hinds K."/>
            <person name="Kemp K."/>
            <person name="Latreille P."/>
            <person name="Layman D."/>
            <person name="Ozersky P."/>
            <person name="Rohlfing T."/>
            <person name="Scheet P."/>
            <person name="Walker C."/>
            <person name="Wamsley A."/>
            <person name="Wohldmann P."/>
            <person name="Pepin K."/>
            <person name="Nelson J."/>
            <person name="Korf I."/>
            <person name="Bedell J.A."/>
            <person name="Hillier L.W."/>
            <person name="Mardis E."/>
            <person name="Waterston R."/>
            <person name="Wilson R."/>
            <person name="Emanuel B.S."/>
            <person name="Shaikh T."/>
            <person name="Kurahashi H."/>
            <person name="Saitta S."/>
            <person name="Budarf M.L."/>
            <person name="McDermid H.E."/>
            <person name="Johnson A."/>
            <person name="Wong A.C.C."/>
            <person name="Morrow B.E."/>
            <person name="Edelmann L."/>
            <person name="Kim U.J."/>
            <person name="Shizuya H."/>
            <person name="Simon M.I."/>
            <person name="Dumanski J.P."/>
            <person name="Peyrard M."/>
            <person name="Kedra D."/>
            <person name="Seroussi E."/>
            <person name="Fransson I."/>
            <person name="Tapia I."/>
            <person name="Bruder C.E."/>
            <person name="O'Brien K.P."/>
            <person name="Wilkinson P."/>
            <person name="Bodenteich A."/>
            <person name="Hartman K."/>
            <person name="Hu X."/>
            <person name="Khan A.S."/>
            <person name="Lane L."/>
            <person name="Tilahun Y."/>
            <person name="Wright H."/>
        </authorList>
    </citation>
    <scope>NUCLEOTIDE SEQUENCE [LARGE SCALE GENOMIC DNA]</scope>
</reference>
<reference key="7">
    <citation type="submission" date="2005-07" db="EMBL/GenBank/DDBJ databases">
        <authorList>
            <person name="Mural R.J."/>
            <person name="Istrail S."/>
            <person name="Sutton G."/>
            <person name="Florea L."/>
            <person name="Halpern A.L."/>
            <person name="Mobarry C.M."/>
            <person name="Lippert R."/>
            <person name="Walenz B."/>
            <person name="Shatkay H."/>
            <person name="Dew I."/>
            <person name="Miller J.R."/>
            <person name="Flanigan M.J."/>
            <person name="Edwards N.J."/>
            <person name="Bolanos R."/>
            <person name="Fasulo D."/>
            <person name="Halldorsson B.V."/>
            <person name="Hannenhalli S."/>
            <person name="Turner R."/>
            <person name="Yooseph S."/>
            <person name="Lu F."/>
            <person name="Nusskern D.R."/>
            <person name="Shue B.C."/>
            <person name="Zheng X.H."/>
            <person name="Zhong F."/>
            <person name="Delcher A.L."/>
            <person name="Huson D.H."/>
            <person name="Kravitz S.A."/>
            <person name="Mouchard L."/>
            <person name="Reinert K."/>
            <person name="Remington K.A."/>
            <person name="Clark A.G."/>
            <person name="Waterman M.S."/>
            <person name="Eichler E.E."/>
            <person name="Adams M.D."/>
            <person name="Hunkapiller M.W."/>
            <person name="Myers E.W."/>
            <person name="Venter J.C."/>
        </authorList>
    </citation>
    <scope>NUCLEOTIDE SEQUENCE [LARGE SCALE GENOMIC DNA]</scope>
</reference>
<reference key="8">
    <citation type="journal article" date="2004" name="Genome Res.">
        <title>The status, quality, and expansion of the NIH full-length cDNA project: the Mammalian Gene Collection (MGC).</title>
        <authorList>
            <consortium name="The MGC Project Team"/>
        </authorList>
    </citation>
    <scope>NUCLEOTIDE SEQUENCE [LARGE SCALE MRNA] (ISOFORM 1)</scope>
    <source>
        <tissue>Skin</tissue>
    </source>
</reference>
<reference key="9">
    <citation type="journal article" date="2001" name="Mol. Pharmacol.">
        <title>The carboxyl terminus of the prolactin-releasing peptide receptor interacts with PDZ domain proteins involved in alpha-amino-3-hydroxy-5-methylisoxazole-4-propionic acid receptor clustering.</title>
        <authorList>
            <person name="Lin S.H.S."/>
            <person name="Arai A.C."/>
            <person name="Wang Z."/>
            <person name="Nothacker H.-P."/>
            <person name="Civelli O."/>
        </authorList>
    </citation>
    <scope>INTERACTION WITH PRLHR</scope>
</reference>
<reference key="10">
    <citation type="journal article" date="2001" name="Neuron">
        <title>Functional interaction between monoamine plasma membrane transporters and the synaptic PDZ domain-containing protein PICK1.</title>
        <authorList>
            <person name="Torres G.E."/>
            <person name="Yao W.-D."/>
            <person name="Mohn A.R."/>
            <person name="Quan H."/>
            <person name="Kim K.-M."/>
            <person name="Levey A.I."/>
            <person name="Staudinger J."/>
            <person name="Caron M.G."/>
        </authorList>
    </citation>
    <scope>INTERACTION WITH SLC6A2 AND SLC6A3</scope>
    <scope>MUTAGENESIS OF 27-LYS-ASP-28</scope>
</reference>
<reference key="11">
    <citation type="journal article" date="2002" name="Biochem. J.">
        <title>Interaction of the synaptic protein PICK1 (protein interacting with C kinase 1) with the non-voltage gated sodium channels BNC1 (brain Na+ channel 1) and ASIC (acid-sensing ion channel).</title>
        <authorList>
            <person name="Hruska-Hageman A.M."/>
            <person name="Wemmie J.A."/>
            <person name="Price M.P."/>
            <person name="Welsh M.J."/>
        </authorList>
    </citation>
    <scope>INTERACTION WITH ASIC1 AND ASIC2</scope>
    <scope>MUTAGENESIS OF 27-LYS-ASP-28</scope>
</reference>
<reference key="12">
    <citation type="journal article" date="2004" name="J. Cell Sci.">
        <title>A role for the PDZ-binding domain of the coxsackie B virus and adenovirus receptor (CAR) in cell adhesion and growth.</title>
        <authorList>
            <person name="Ashbourne-Excoffon K.J.D."/>
            <person name="Hruska-Hageman A.M."/>
            <person name="Klotz M."/>
            <person name="Traver G.L."/>
            <person name="Zabner J."/>
        </authorList>
    </citation>
    <scope>INTERACTION WITH CXADR</scope>
</reference>
<reference key="13">
    <citation type="journal article" date="2004" name="J. Biol. Chem.">
        <title>The PDZ domain of PICK1 differentially accepts protein kinase C-alpha and GluR2 as interacting ligands.</title>
        <authorList>
            <person name="Dev K.K."/>
            <person name="Nakanishi S."/>
            <person name="Henley J.M."/>
        </authorList>
    </citation>
    <scope>INTERACTION WITH GRIA2 AND PRKCA</scope>
    <scope>MUTAGENESIS OF LYS-27</scope>
</reference>
<reference key="14">
    <citation type="journal article" date="2010" name="Neurochem. Int.">
        <title>Threonine 82 at the PDZ domain of PICK1 is critical for AMPA receptor interaction and localization.</title>
        <authorList>
            <person name="Shao X."/>
            <person name="Zhu L."/>
            <person name="Wang Y."/>
            <person name="Lu Y."/>
            <person name="Wang W."/>
            <person name="Zhu J."/>
            <person name="Shen Y."/>
            <person name="Xia J."/>
            <person name="Luo J."/>
        </authorList>
    </citation>
    <scope>FUNCTION</scope>
    <scope>PHOSPHORYLATION AT THR-82</scope>
</reference>
<reference key="15">
    <citation type="journal article" date="2007" name="Protein Sci.">
        <title>Structure of PICK1 and other PDZ domains obtained with the help of self-binding C-terminal extensions.</title>
        <authorList>
            <person name="Elkins J.M."/>
            <person name="Papagrigoriou E."/>
            <person name="Berridge G."/>
            <person name="Yang X."/>
            <person name="Phillips C."/>
            <person name="Gileadi C."/>
            <person name="Savitsky P."/>
            <person name="Doyle D.A."/>
        </authorList>
    </citation>
    <scope>X-RAY CRYSTALLOGRAPHY (1.12 ANGSTROMS) OF 19-105</scope>
</reference>
<comment type="function">
    <text evidence="13">Probable adapter protein that bind to and organize the subcellular localization of a variety of membrane proteins containing some PDZ recognition sequence. Involved in the clustering of various receptors, possibly by acting at the receptor internalization level. Plays a role in synaptic plasticity by regulating the trafficking and internalization of AMPA receptors. May be regulated upon PRKCA activation. May regulate ASIC1/ASIC3 channel. Regulates actin polymerization by inhibiting the actin-nucleating activity of the Arp2/3 complex; the function is competitive with nucleation promoting factors and is linked to neuronal morphology regulation and AMPA receptor (AMPAR) endocytosis. Via interaction with the Arp2/3 complex involved in regulation of synaptic plasicity of excitatory synapses and required for spine shrinkage during long-term depression (LTD). Involved in regulation of astrocyte morphology, antagonistic to Arp2/3 complex activator WASL/N-WASP function.</text>
</comment>
<comment type="subunit">
    <text evidence="2 7 8 9 10 11 12">Monomer and homodimer. Interacts with CXADR. Interacts presynaptically with the glutamate receptors GRIA2, GRIA3, GRIK3, isoform 3 of GRIA4, isoform A of GRM4, GRM7 and GRM8; with NAPA and NAPB; and with BTG2. The interaction with NAPA and NAPB disrupts the interaction with GRIA2, conducting to the internalization of GRIA2. Interacts with PRKCA; with the amine transporters SLC6A2 and SLC6A3; with the channels ASIC1 and ASIC2; with the GTP-binding proteins ARF1 and ARF3; with the ephrin receptor tyrosine kinases EPHA7, EPHB1 and EPHB2; with ERBB2 and through its PDZ domain with the C-terminal tail of PRLHR. Interacts with UNC5A. Interacts (via AH domain) with NCS1/FREQ; in a calcium-dependent manner. Interacts with F-actin and associates with the ARP2/3 complex. Interacts (via PDZ domain) with ARF1 (activated); the interaction blocks Arp2/3 complex inhibition. Interacts with SORCS3 (By similarity).</text>
</comment>
<comment type="interaction">
    <interactant intactId="EBI-79165">
        <id>Q9NRD5</id>
    </interactant>
    <interactant intactId="EBI-2602396">
        <id>Q9ULW3</id>
        <label>ABT1</label>
    </interactant>
    <organismsDiffer>false</organismsDiffer>
    <experiments>3</experiments>
</comment>
<comment type="interaction">
    <interactant intactId="EBI-79165">
        <id>Q9NRD5</id>
    </interactant>
    <interactant intactId="EBI-10255023">
        <id>Q6ZN18-2</id>
        <label>AEBP2</label>
    </interactant>
    <organismsDiffer>false</organismsDiffer>
    <experiments>3</experiments>
</comment>
<comment type="interaction">
    <interactant intactId="EBI-79165">
        <id>Q9NRD5</id>
    </interactant>
    <interactant intactId="EBI-296058">
        <id>P31751</id>
        <label>AKT2</label>
    </interactant>
    <organismsDiffer>false</organismsDiffer>
    <experiments>3</experiments>
</comment>
<comment type="interaction">
    <interactant intactId="EBI-79165">
        <id>Q9NRD5</id>
    </interactant>
    <interactant intactId="EBI-13329511">
        <id>Q96BT7-2</id>
        <label>ALKBH8</label>
    </interactant>
    <organismsDiffer>false</organismsDiffer>
    <experiments>3</experiments>
</comment>
<comment type="interaction">
    <interactant intactId="EBI-79165">
        <id>Q9NRD5</id>
    </interactant>
    <interactant intactId="EBI-541426">
        <id>Q9BXS5</id>
        <label>AP1M1</label>
    </interactant>
    <organismsDiffer>false</organismsDiffer>
    <experiments>3</experiments>
</comment>
<comment type="interaction">
    <interactant intactId="EBI-79165">
        <id>Q9NRD5</id>
    </interactant>
    <interactant intactId="EBI-12067760">
        <id>P61966-2</id>
        <label>AP1S1</label>
    </interactant>
    <organismsDiffer>false</organismsDiffer>
    <experiments>3</experiments>
</comment>
<comment type="interaction">
    <interactant intactId="EBI-79165">
        <id>Q9NRD5</id>
    </interactant>
    <interactant intactId="EBI-10312733">
        <id>Q9NR81</id>
        <label>ARHGEF3</label>
    </interactant>
    <organismsDiffer>false</organismsDiffer>
    <experiments>3</experiments>
</comment>
<comment type="interaction">
    <interactant intactId="EBI-79165">
        <id>Q9NRD5</id>
    </interactant>
    <interactant intactId="EBI-602199">
        <id>Q12774</id>
        <label>ARHGEF5</label>
    </interactant>
    <organismsDiffer>false</organismsDiffer>
    <experiments>3</experiments>
</comment>
<comment type="interaction">
    <interactant intactId="EBI-79165">
        <id>Q9NRD5</id>
    </interactant>
    <interactant intactId="EBI-714543">
        <id>Q15041</id>
        <label>ARL6IP1</label>
    </interactant>
    <organismsDiffer>false</organismsDiffer>
    <experiments>3</experiments>
</comment>
<comment type="interaction">
    <interactant intactId="EBI-79165">
        <id>Q9NRD5</id>
    </interactant>
    <interactant intactId="EBI-2843626">
        <id>Q9P291</id>
        <label>ARMCX1</label>
    </interactant>
    <organismsDiffer>false</organismsDiffer>
    <experiments>3</experiments>
</comment>
<comment type="interaction">
    <interactant intactId="EBI-79165">
        <id>Q9NRD5</id>
    </interactant>
    <interactant intactId="EBI-11107474">
        <id>Q96QS3</id>
        <label>ARX</label>
    </interactant>
    <organismsDiffer>false</organismsDiffer>
    <experiments>2</experiments>
</comment>
<comment type="interaction">
    <interactant intactId="EBI-79165">
        <id>Q9NRD5</id>
    </interactant>
    <interactant intactId="EBI-79189">
        <id>P78348</id>
        <label>ASIC1</label>
    </interactant>
    <organismsDiffer>false</organismsDiffer>
    <experiments>4</experiments>
</comment>
<comment type="interaction">
    <interactant intactId="EBI-79165">
        <id>Q9NRD5</id>
    </interactant>
    <interactant intactId="EBI-79149">
        <id>Q16515</id>
        <label>ASIC2</label>
    </interactant>
    <organismsDiffer>false</organismsDiffer>
    <experiments>3</experiments>
</comment>
<comment type="interaction">
    <interactant intactId="EBI-79165">
        <id>Q9NRD5</id>
    </interactant>
    <interactant intactId="EBI-745689">
        <id>Q7L5A3</id>
        <label>ATOSB</label>
    </interactant>
    <organismsDiffer>false</organismsDiffer>
    <experiments>3</experiments>
</comment>
<comment type="interaction">
    <interactant intactId="EBI-79165">
        <id>Q9NRD5</id>
    </interactant>
    <interactant intactId="EBI-718459">
        <id>Q9UII2</id>
        <label>ATP5IF1</label>
    </interactant>
    <organismsDiffer>false</organismsDiffer>
    <experiments>3</experiments>
</comment>
<comment type="interaction">
    <interactant intactId="EBI-79165">
        <id>Q9NRD5</id>
    </interactant>
    <interactant intactId="EBI-8640233">
        <id>Q5T686</id>
        <label>AVPI1</label>
    </interactant>
    <organismsDiffer>false</organismsDiffer>
    <experiments>3</experiments>
</comment>
<comment type="interaction">
    <interactant intactId="EBI-79165">
        <id>Q9NRD5</id>
    </interactant>
    <interactant intactId="EBI-742750">
        <id>Q8TBE0</id>
        <label>BAHD1</label>
    </interactant>
    <organismsDiffer>false</organismsDiffer>
    <experiments>3</experiments>
</comment>
<comment type="interaction">
    <interactant intactId="EBI-79165">
        <id>Q9NRD5</id>
    </interactant>
    <interactant intactId="EBI-1385773">
        <id>Q9BZR8</id>
        <label>BCL2L14</label>
    </interactant>
    <organismsDiffer>false</organismsDiffer>
    <experiments>3</experiments>
</comment>
<comment type="interaction">
    <interactant intactId="EBI-79165">
        <id>Q9NRD5</id>
    </interactant>
    <interactant intactId="EBI-7162175">
        <id>Q9HBH7</id>
        <label>BEX1</label>
    </interactant>
    <organismsDiffer>false</organismsDiffer>
    <experiments>3</experiments>
</comment>
<comment type="interaction">
    <interactant intactId="EBI-79165">
        <id>Q9NRD5</id>
    </interactant>
    <interactant intactId="EBI-2105445">
        <id>P51451</id>
        <label>BLK</label>
    </interactant>
    <organismsDiffer>false</organismsDiffer>
    <experiments>3</experiments>
</comment>
<comment type="interaction">
    <interactant intactId="EBI-79165">
        <id>Q9NRD5</id>
    </interactant>
    <interactant intactId="EBI-465872">
        <id>Q6QNY1</id>
        <label>BLOC1S2</label>
    </interactant>
    <organismsDiffer>false</organismsDiffer>
    <experiments>3</experiments>
</comment>
<comment type="interaction">
    <interactant intactId="EBI-79165">
        <id>Q9NRD5</id>
    </interactant>
    <interactant intactId="EBI-12086950">
        <id>Q53S33</id>
        <label>BOLA3</label>
    </interactant>
    <organismsDiffer>false</organismsDiffer>
    <experiments>3</experiments>
</comment>
<comment type="interaction">
    <interactant intactId="EBI-79165">
        <id>Q9NRD5</id>
    </interactant>
    <interactant intactId="EBI-714754">
        <id>O95696</id>
        <label>BRD1</label>
    </interactant>
    <organismsDiffer>false</organismsDiffer>
    <experiments>3</experiments>
</comment>
<comment type="interaction">
    <interactant intactId="EBI-79165">
        <id>Q9NRD5</id>
    </interactant>
    <interactant intactId="EBI-3904603">
        <id>P41223</id>
        <label>BUD31</label>
    </interactant>
    <organismsDiffer>false</organismsDiffer>
    <experiments>3</experiments>
</comment>
<comment type="interaction">
    <interactant intactId="EBI-79165">
        <id>Q9NRD5</id>
    </interactant>
    <interactant intactId="EBI-358049">
        <id>Q13895</id>
        <label>BYSL</label>
    </interactant>
    <organismsDiffer>false</organismsDiffer>
    <experiments>3</experiments>
</comment>
<comment type="interaction">
    <interactant intactId="EBI-79165">
        <id>Q9NRD5</id>
    </interactant>
    <interactant intactId="EBI-12380221">
        <id>Q86YS7-2</id>
        <label>C2CD5</label>
    </interactant>
    <organismsDiffer>false</organismsDiffer>
    <experiments>3</experiments>
</comment>
<comment type="interaction">
    <interactant intactId="EBI-79165">
        <id>Q9NRD5</id>
    </interactant>
    <interactant intactId="EBI-6657981">
        <id>Q504U0</id>
        <label>C4orf46</label>
    </interactant>
    <organismsDiffer>false</organismsDiffer>
    <experiments>3</experiments>
</comment>
<comment type="interaction">
    <interactant intactId="EBI-79165">
        <id>Q9NRD5</id>
    </interactant>
    <interactant intactId="EBI-715389">
        <id>Q9H7E9</id>
        <label>C8orf33</label>
    </interactant>
    <organismsDiffer>false</organismsDiffer>
    <experiments>3</experiments>
</comment>
<comment type="interaction">
    <interactant intactId="EBI-79165">
        <id>Q9NRD5</id>
    </interactant>
    <interactant intactId="EBI-1038838">
        <id>Q13936</id>
        <label>CACNA1C</label>
    </interactant>
    <organismsDiffer>false</organismsDiffer>
    <experiments>4</experiments>
</comment>
<comment type="interaction">
    <interactant intactId="EBI-79165">
        <id>Q9NRD5</id>
    </interactant>
    <interactant intactId="EBI-11530605">
        <id>Q9H257-2</id>
        <label>CARD9</label>
    </interactant>
    <organismsDiffer>false</organismsDiffer>
    <experiments>3</experiments>
</comment>
<comment type="interaction">
    <interactant intactId="EBI-79165">
        <id>Q9NRD5</id>
    </interactant>
    <interactant intactId="EBI-712912">
        <id>Q9HC52</id>
        <label>CBX8</label>
    </interactant>
    <organismsDiffer>false</organismsDiffer>
    <experiments>3</experiments>
</comment>
<comment type="interaction">
    <interactant intactId="EBI-79165">
        <id>Q9NRD5</id>
    </interactant>
    <interactant intactId="EBI-10171570">
        <id>Q68D86</id>
        <label>CCDC102B</label>
    </interactant>
    <organismsDiffer>false</organismsDiffer>
    <experiments>3</experiments>
</comment>
<comment type="interaction">
    <interactant intactId="EBI-79165">
        <id>Q9NRD5</id>
    </interactant>
    <interactant intactId="EBI-10261970">
        <id>Q8IW40</id>
        <label>CCDC103</label>
    </interactant>
    <organismsDiffer>false</organismsDiffer>
    <experiments>3</experiments>
</comment>
<comment type="interaction">
    <interactant intactId="EBI-79165">
        <id>Q9NRD5</id>
    </interactant>
    <interactant intactId="EBI-741406">
        <id>P51946</id>
        <label>CCNH</label>
    </interactant>
    <organismsDiffer>false</organismsDiffer>
    <experiments>3</experiments>
</comment>
<comment type="interaction">
    <interactant intactId="EBI-79165">
        <id>Q9NRD5</id>
    </interactant>
    <interactant intactId="EBI-3438291">
        <id>O14613</id>
        <label>CDC42EP2</label>
    </interactant>
    <organismsDiffer>false</organismsDiffer>
    <experiments>3</experiments>
</comment>
<comment type="interaction">
    <interactant intactId="EBI-79165">
        <id>Q9NRD5</id>
    </interactant>
    <interactant intactId="EBI-930143">
        <id>Q6P1J9</id>
        <label>CDC73</label>
    </interactant>
    <organismsDiffer>false</organismsDiffer>
    <experiments>3</experiments>
</comment>
<comment type="interaction">
    <interactant intactId="EBI-79165">
        <id>Q9NRD5</id>
    </interactant>
    <interactant intactId="EBI-5278764">
        <id>Q96GN5</id>
        <label>CDCA7L</label>
    </interactant>
    <organismsDiffer>false</organismsDiffer>
    <experiments>3</experiments>
</comment>
<comment type="interaction">
    <interactant intactId="EBI-79165">
        <id>Q9NRD5</id>
    </interactant>
    <interactant intactId="EBI-1052532">
        <id>O14519</id>
        <label>CDK2AP1</label>
    </interactant>
    <organismsDiffer>false</organismsDiffer>
    <experiments>3</experiments>
</comment>
<comment type="interaction">
    <interactant intactId="EBI-79165">
        <id>Q9NRD5</id>
    </interactant>
    <interactant intactId="EBI-3919850">
        <id>Q8IVW4</id>
        <label>CDKL3</label>
    </interactant>
    <organismsDiffer>false</organismsDiffer>
    <experiments>3</experiments>
</comment>
<comment type="interaction">
    <interactant intactId="EBI-79165">
        <id>Q9NRD5</id>
    </interactant>
    <interactant intactId="EBI-711280">
        <id>P42772</id>
        <label>CDKN2B</label>
    </interactant>
    <organismsDiffer>false</organismsDiffer>
    <experiments>3</experiments>
</comment>
<comment type="interaction">
    <interactant intactId="EBI-79165">
        <id>Q9NRD5</id>
    </interactant>
    <interactant intactId="EBI-745859">
        <id>P55273</id>
        <label>CDKN2D</label>
    </interactant>
    <organismsDiffer>false</organismsDiffer>
    <experiments>3</experiments>
</comment>
<comment type="interaction">
    <interactant intactId="EBI-79165">
        <id>Q9NRD5</id>
    </interactant>
    <interactant intactId="EBI-741885">
        <id>Q96LK0</id>
        <label>CEP19</label>
    </interactant>
    <organismsDiffer>false</organismsDiffer>
    <experiments>3</experiments>
</comment>
<comment type="interaction">
    <interactant intactId="EBI-79165">
        <id>Q9NRD5</id>
    </interactant>
    <interactant intactId="EBI-1811944">
        <id>O15078</id>
        <label>CEP290</label>
    </interactant>
    <organismsDiffer>false</organismsDiffer>
    <experiments>3</experiments>
</comment>
<comment type="interaction">
    <interactant intactId="EBI-79165">
        <id>Q9NRD5</id>
    </interactant>
    <interactant intactId="EBI-1104570">
        <id>Q8IYX8</id>
        <label>CEP57L1</label>
    </interactant>
    <organismsDiffer>false</organismsDiffer>
    <experiments>3</experiments>
</comment>
<comment type="interaction">
    <interactant intactId="EBI-79165">
        <id>Q9NRD5</id>
    </interactant>
    <interactant intactId="EBI-11144046">
        <id>Q96ST8-3</id>
        <label>CEP89</label>
    </interactant>
    <organismsDiffer>false</organismsDiffer>
    <experiments>3</experiments>
</comment>
<comment type="interaction">
    <interactant intactId="EBI-79165">
        <id>Q9NRD5</id>
    </interactant>
    <interactant intactId="EBI-372775">
        <id>Q96GE4</id>
        <label>CEP95</label>
    </interactant>
    <organismsDiffer>false</organismsDiffer>
    <experiments>3</experiments>
</comment>
<comment type="interaction">
    <interactant intactId="EBI-79165">
        <id>Q9NRD5</id>
    </interactant>
    <interactant intactId="EBI-723153">
        <id>Q9UFW8</id>
        <label>CGGBP1</label>
    </interactant>
    <organismsDiffer>false</organismsDiffer>
    <experiments>3</experiments>
</comment>
<comment type="interaction">
    <interactant intactId="EBI-79165">
        <id>Q9NRD5</id>
    </interactant>
    <interactant intactId="EBI-2118090">
        <id>Q7LBR1</id>
        <label>CHMP1B</label>
    </interactant>
    <organismsDiffer>false</organismsDiffer>
    <experiments>3</experiments>
</comment>
<comment type="interaction">
    <interactant intactId="EBI-79165">
        <id>Q9NRD5</id>
    </interactant>
    <interactant intactId="EBI-945751">
        <id>P38432</id>
        <label>COIL</label>
    </interactant>
    <organismsDiffer>false</organismsDiffer>
    <experiments>3</experiments>
</comment>
<comment type="interaction">
    <interactant intactId="EBI-79165">
        <id>Q9NRD5</id>
    </interactant>
    <interactant intactId="EBI-7097057">
        <id>Q96FN4</id>
        <label>CPNE2</label>
    </interactant>
    <organismsDiffer>false</organismsDiffer>
    <experiments>3</experiments>
</comment>
<comment type="interaction">
    <interactant intactId="EBI-79165">
        <id>Q9NRD5</id>
    </interactant>
    <interactant intactId="EBI-12012272">
        <id>Q9UBL6-2</id>
        <label>CPNE7</label>
    </interactant>
    <organismsDiffer>false</organismsDiffer>
    <experiments>3</experiments>
</comment>
<comment type="interaction">
    <interactant intactId="EBI-79165">
        <id>Q9NRD5</id>
    </interactant>
    <interactant intactId="EBI-2212355">
        <id>Q49AN0</id>
        <label>CRY2</label>
    </interactant>
    <organismsDiffer>false</organismsDiffer>
    <experiments>3</experiments>
</comment>
<comment type="interaction">
    <interactant intactId="EBI-79165">
        <id>Q9NRD5</id>
    </interactant>
    <interactant intactId="EBI-347451">
        <id>P19784</id>
        <label>CSNK2A2</label>
    </interactant>
    <organismsDiffer>false</organismsDiffer>
    <experiments>5</experiments>
</comment>
<comment type="interaction">
    <interactant intactId="EBI-79165">
        <id>Q9NRD5</id>
    </interactant>
    <interactant intactId="EBI-5462635">
        <id>P08311</id>
        <label>CTSG</label>
    </interactant>
    <organismsDiffer>false</organismsDiffer>
    <experiments>3</experiments>
</comment>
<comment type="interaction">
    <interactant intactId="EBI-79165">
        <id>Q9NRD5</id>
    </interactant>
    <interactant intactId="EBI-714918">
        <id>Q9NTM9</id>
        <label>CUTC</label>
    </interactant>
    <organismsDiffer>false</organismsDiffer>
    <experiments>3</experiments>
</comment>
<comment type="interaction">
    <interactant intactId="EBI-79165">
        <id>Q9NRD5</id>
    </interactant>
    <interactant intactId="EBI-5453285">
        <id>Q2TBE0</id>
        <label>CWF19L2</label>
    </interactant>
    <organismsDiffer>false</organismsDiffer>
    <experiments>3</experiments>
</comment>
<comment type="interaction">
    <interactant intactId="EBI-79165">
        <id>Q9NRD5</id>
    </interactant>
    <interactant intactId="EBI-14156412">
        <id>Q08AG9</id>
        <label>CYP21A2</label>
    </interactant>
    <organismsDiffer>false</organismsDiffer>
    <experiments>3</experiments>
</comment>
<comment type="interaction">
    <interactant intactId="EBI-79165">
        <id>Q9NRD5</id>
    </interactant>
    <interactant intactId="EBI-739870">
        <id>P32321</id>
        <label>DCTD</label>
    </interactant>
    <organismsDiffer>false</organismsDiffer>
    <experiments>3</experiments>
</comment>
<comment type="interaction">
    <interactant intactId="EBI-79165">
        <id>Q9NRD5</id>
    </interactant>
    <interactant intactId="EBI-3924013">
        <id>Q9BTE7</id>
        <label>DCUN1D5</label>
    </interactant>
    <organismsDiffer>false</organismsDiffer>
    <experiments>3</experiments>
</comment>
<comment type="interaction">
    <interactant intactId="EBI-79165">
        <id>Q9NRD5</id>
    </interactant>
    <interactant intactId="EBI-5459844">
        <id>Q8NHQ9</id>
        <label>DDX55</label>
    </interactant>
    <organismsDiffer>false</organismsDiffer>
    <experiments>3</experiments>
</comment>
<comment type="interaction">
    <interactant intactId="EBI-79165">
        <id>Q9NRD5</id>
    </interactant>
    <interactant intactId="EBI-351257">
        <id>P26196</id>
        <label>DDX6</label>
    </interactant>
    <organismsDiffer>false</organismsDiffer>
    <experiments>3</experiments>
</comment>
<comment type="interaction">
    <interactant intactId="EBI-79165">
        <id>Q9NRD5</id>
    </interactant>
    <interactant intactId="EBI-930865">
        <id>Q14565</id>
        <label>DMC1</label>
    </interactant>
    <organismsDiffer>false</organismsDiffer>
    <experiments>3</experiments>
</comment>
<comment type="interaction">
    <interactant intactId="EBI-79165">
        <id>Q9NRD5</id>
    </interactant>
    <interactant intactId="EBI-295827">
        <id>P11532</id>
        <label>DMD</label>
    </interactant>
    <organismsDiffer>false</organismsDiffer>
    <experiments>3</experiments>
</comment>
<comment type="interaction">
    <interactant intactId="EBI-79165">
        <id>Q9NRD5</id>
    </interactant>
    <interactant intactId="EBI-11514233">
        <id>P59910</id>
        <label>DNAJB13</label>
    </interactant>
    <organismsDiffer>false</organismsDiffer>
    <experiments>3</experiments>
</comment>
<comment type="interaction">
    <interactant intactId="EBI-79165">
        <id>Q9NRD5</id>
    </interactant>
    <interactant intactId="EBI-719459">
        <id>P26358</id>
        <label>DNMT1</label>
    </interactant>
    <organismsDiffer>false</organismsDiffer>
    <experiments>2</experiments>
</comment>
<comment type="interaction">
    <interactant intactId="EBI-79165">
        <id>Q9NRD5</id>
    </interactant>
    <interactant intactId="EBI-2795449">
        <id>Q9H147</id>
        <label>DNTTIP1</label>
    </interactant>
    <organismsDiffer>false</organismsDiffer>
    <experiments>3</experiments>
</comment>
<comment type="interaction">
    <interactant intactId="EBI-79165">
        <id>Q9NRD5</id>
    </interactant>
    <interactant intactId="EBI-5666736">
        <id>Q5QJE6</id>
        <label>DNTTIP2</label>
    </interactant>
    <organismsDiffer>false</organismsDiffer>
    <experiments>3</experiments>
</comment>
<comment type="interaction">
    <interactant intactId="EBI-79165">
        <id>Q9NRD5</id>
    </interactant>
    <interactant intactId="EBI-359932">
        <id>Q92785</id>
        <label>DPF2</label>
    </interactant>
    <organismsDiffer>false</organismsDiffer>
    <experiments>3</experiments>
</comment>
<comment type="interaction">
    <interactant intactId="EBI-79165">
        <id>Q9NRD5</id>
    </interactant>
    <interactant intactId="EBI-712941">
        <id>Q14919</id>
        <label>DRAP1</label>
    </interactant>
    <organismsDiffer>false</organismsDiffer>
    <experiments>3</experiments>
</comment>
<comment type="interaction">
    <interactant intactId="EBI-79165">
        <id>Q9NRD5</id>
    </interactant>
    <interactant intactId="EBI-11984733">
        <id>O60941-5</id>
        <label>DTNB</label>
    </interactant>
    <organismsDiffer>false</organismsDiffer>
    <experiments>3</experiments>
</comment>
<comment type="interaction">
    <interactant intactId="EBI-79165">
        <id>Q9NRD5</id>
    </interactant>
    <interactant intactId="EBI-1054321">
        <id>Q68J44</id>
        <label>DUSP29</label>
    </interactant>
    <organismsDiffer>false</organismsDiffer>
    <experiments>3</experiments>
</comment>
<comment type="interaction">
    <interactant intactId="EBI-79165">
        <id>Q9NRD5</id>
    </interactant>
    <interactant intactId="EBI-769261">
        <id>Q96JC9</id>
        <label>EAF1</label>
    </interactant>
    <organismsDiffer>false</organismsDiffer>
    <experiments>3</experiments>
</comment>
<comment type="interaction">
    <interactant intactId="EBI-79165">
        <id>Q9NRD5</id>
    </interactant>
    <interactant intactId="EBI-747840">
        <id>Q96G04</id>
        <label>EEF2KMT</label>
    </interactant>
    <organismsDiffer>false</organismsDiffer>
    <experiments>3</experiments>
</comment>
<comment type="interaction">
    <interactant intactId="EBI-79165">
        <id>Q9NRD5</id>
    </interactant>
    <interactant intactId="EBI-2349927">
        <id>Q5JST6</id>
        <label>EFHC2</label>
    </interactant>
    <organismsDiffer>false</organismsDiffer>
    <experiments>3</experiments>
</comment>
<comment type="interaction">
    <interactant intactId="EBI-79165">
        <id>Q9NRD5</id>
    </interactant>
    <interactant intactId="EBI-2339219">
        <id>Q08426</id>
        <label>EHHADH</label>
    </interactant>
    <organismsDiffer>false</organismsDiffer>
    <experiments>3</experiments>
</comment>
<comment type="interaction">
    <interactant intactId="EBI-79165">
        <id>Q9NRD5</id>
    </interactant>
    <interactant intactId="EBI-750700">
        <id>Q8N9N8</id>
        <label>EIF1AD</label>
    </interactant>
    <organismsDiffer>false</organismsDiffer>
    <experiments>3</experiments>
</comment>
<comment type="interaction">
    <interactant intactId="EBI-79165">
        <id>Q9NRD5</id>
    </interactant>
    <interactant intactId="EBI-353818">
        <id>O15371</id>
        <label>EIF3D</label>
    </interactant>
    <organismsDiffer>false</organismsDiffer>
    <experiments>3</experiments>
</comment>
<comment type="interaction">
    <interactant intactId="EBI-79165">
        <id>Q9NRD5</id>
    </interactant>
    <interactant intactId="EBI-299104">
        <id>P38919</id>
        <label>EIF4A3</label>
    </interactant>
    <organismsDiffer>false</organismsDiffer>
    <experiments>3</experiments>
</comment>
<comment type="interaction">
    <interactant intactId="EBI-79165">
        <id>Q9NRD5</id>
    </interactant>
    <interactant intactId="EBI-74090">
        <id>Q13541</id>
        <label>EIF4EBP1</label>
    </interactant>
    <organismsDiffer>false</organismsDiffer>
    <experiments>3</experiments>
</comment>
<comment type="interaction">
    <interactant intactId="EBI-79165">
        <id>Q9NRD5</id>
    </interactant>
    <interactant intactId="EBI-12222405">
        <id>Q15056-2</id>
        <label>EIF4H</label>
    </interactant>
    <organismsDiffer>false</organismsDiffer>
    <experiments>3</experiments>
</comment>
<comment type="interaction">
    <interactant intactId="EBI-79165">
        <id>Q9NRD5</id>
    </interactant>
    <interactant intactId="EBI-373150">
        <id>P63241</id>
        <label>EIF5A</label>
    </interactant>
    <organismsDiffer>false</organismsDiffer>
    <experiments>3</experiments>
</comment>
<comment type="interaction">
    <interactant intactId="EBI-79165">
        <id>Q9NRD5</id>
    </interactant>
    <interactant intactId="EBI-744099">
        <id>Q9H0I2</id>
        <label>ENKD1</label>
    </interactant>
    <organismsDiffer>false</organismsDiffer>
    <experiments>3</experiments>
</comment>
<comment type="interaction">
    <interactant intactId="EBI-79165">
        <id>Q9NRD5</id>
    </interactant>
    <interactant intactId="EBI-6255981">
        <id>Q7L775</id>
        <label>EPM2AIP1</label>
    </interactant>
    <organismsDiffer>false</organismsDiffer>
    <experiments>3</experiments>
</comment>
<comment type="interaction">
    <interactant intactId="EBI-79165">
        <id>Q9NRD5</id>
    </interactant>
    <interactant intactId="EBI-3951849">
        <id>Q56NI9</id>
        <label>ESCO2</label>
    </interactant>
    <organismsDiffer>false</organismsDiffer>
    <experiments>3</experiments>
</comment>
<comment type="interaction">
    <interactant intactId="EBI-79165">
        <id>Q9NRD5</id>
    </interactant>
    <interactant intactId="EBI-371876">
        <id>Q9NQT4</id>
        <label>EXOSC5</label>
    </interactant>
    <organismsDiffer>false</organismsDiffer>
    <experiments>3</experiments>
</comment>
<comment type="interaction">
    <interactant intactId="EBI-79165">
        <id>Q9NRD5</id>
    </interactant>
    <interactant intactId="EBI-719941">
        <id>Q3B820</id>
        <label>FAM161A</label>
    </interactant>
    <organismsDiffer>false</organismsDiffer>
    <experiments>3</experiments>
</comment>
<comment type="interaction">
    <interactant intactId="EBI-79165">
        <id>Q9NRD5</id>
    </interactant>
    <interactant intactId="EBI-7225287">
        <id>Q96MY7</id>
        <label>FAM161B</label>
    </interactant>
    <organismsDiffer>false</organismsDiffer>
    <experiments>3</experiments>
</comment>
<comment type="interaction">
    <interactant intactId="EBI-79165">
        <id>Q9NRD5</id>
    </interactant>
    <interactant intactId="EBI-12290965">
        <id>Q5XKK7</id>
        <label>FAM219B</label>
    </interactant>
    <organismsDiffer>false</organismsDiffer>
    <experiments>3</experiments>
</comment>
<comment type="interaction">
    <interactant intactId="EBI-79165">
        <id>Q9NRD5</id>
    </interactant>
    <interactant intactId="EBI-6658203">
        <id>Q86YD7</id>
        <label>FAM90A1</label>
    </interactant>
    <organismsDiffer>false</organismsDiffer>
    <experiments>3</experiments>
</comment>
<comment type="interaction">
    <interactant intactId="EBI-79165">
        <id>Q9NRD5</id>
    </interactant>
    <interactant intactId="EBI-8468186">
        <id>Q8IZU1</id>
        <label>FAM9A</label>
    </interactant>
    <organismsDiffer>false</organismsDiffer>
    <experiments>3</experiments>
</comment>
<comment type="interaction">
    <interactant intactId="EBI-79165">
        <id>Q9NRD5</id>
    </interactant>
    <interactant intactId="EBI-2557269">
        <id>Q9UKT7</id>
        <label>FBXL3</label>
    </interactant>
    <organismsDiffer>false</organismsDiffer>
    <experiments>3</experiments>
</comment>
<comment type="interaction">
    <interactant intactId="EBI-79165">
        <id>Q9NRD5</id>
    </interactant>
    <interactant intactId="EBI-2321097">
        <id>Q96CD0</id>
        <label>FBXL8</label>
    </interactant>
    <organismsDiffer>false</organismsDiffer>
    <experiments>3</experiments>
</comment>
<comment type="interaction">
    <interactant intactId="EBI-79165">
        <id>Q9NRD5</id>
    </interactant>
    <interactant intactId="EBI-11479104">
        <id>O43320</id>
        <label>FGF16</label>
    </interactant>
    <organismsDiffer>false</organismsDiffer>
    <experiments>3</experiments>
</comment>
<comment type="interaction">
    <interactant intactId="EBI-79165">
        <id>Q9NRD5</id>
    </interactant>
    <interactant intactId="EBI-744771">
        <id>O75344</id>
        <label>FKBP6</label>
    </interactant>
    <organismsDiffer>false</organismsDiffer>
    <experiments>3</experiments>
</comment>
<comment type="interaction">
    <interactant intactId="EBI-79165">
        <id>Q9NRD5</id>
    </interactant>
    <interactant intactId="EBI-719415">
        <id>Q4VC44</id>
        <label>FLYWCH1</label>
    </interactant>
    <organismsDiffer>false</organismsDiffer>
    <experiments>3</experiments>
</comment>
<comment type="interaction">
    <interactant intactId="EBI-79165">
        <id>Q9NRD5</id>
    </interactant>
    <interactant intactId="EBI-372506">
        <id>Q8TAE8</id>
        <label>GADD45GIP1</label>
    </interactant>
    <organismsDiffer>false</organismsDiffer>
    <experiments>3</experiments>
</comment>
<comment type="interaction">
    <interactant intactId="EBI-79165">
        <id>Q9NRD5</id>
    </interactant>
    <interactant intactId="EBI-7960826">
        <id>Q8NHY3</id>
        <label>GAS2L2</label>
    </interactant>
    <organismsDiffer>false</organismsDiffer>
    <experiments>3</experiments>
</comment>
<comment type="interaction">
    <interactant intactId="EBI-79165">
        <id>Q9NRD5</id>
    </interactant>
    <interactant intactId="EBI-748515">
        <id>Q8IVS8</id>
        <label>GLYCTK</label>
    </interactant>
    <organismsDiffer>false</organismsDiffer>
    <experiments>3</experiments>
</comment>
<comment type="interaction">
    <interactant intactId="EBI-79165">
        <id>Q9NRD5</id>
    </interactant>
    <interactant intactId="EBI-12178961">
        <id>Q8N954-2</id>
        <label>GPATCH11</label>
    </interactant>
    <organismsDiffer>false</organismsDiffer>
    <experiments>3</experiments>
</comment>
<comment type="interaction">
    <interactant intactId="EBI-79165">
        <id>Q9NRD5</id>
    </interactant>
    <interactant intactId="EBI-12068108">
        <id>Q9NW75-2</id>
        <label>GPATCH2</label>
    </interactant>
    <organismsDiffer>false</organismsDiffer>
    <experiments>4</experiments>
</comment>
<comment type="interaction">
    <interactant intactId="EBI-79165">
        <id>Q9NRD5</id>
    </interactant>
    <interactant intactId="EBI-3050469">
        <id>O75487</id>
        <label>GPC4</label>
    </interactant>
    <organismsDiffer>false</organismsDiffer>
    <experiments>3</experiments>
</comment>
<comment type="interaction">
    <interactant intactId="EBI-79165">
        <id>Q9NRD5</id>
    </interactant>
    <interactant intactId="EBI-746309">
        <id>Q92917</id>
        <label>GPKOW</label>
    </interactant>
    <organismsDiffer>false</organismsDiffer>
    <experiments>3</experiments>
</comment>
<comment type="interaction">
    <interactant intactId="EBI-79165">
        <id>Q9NRD5</id>
    </interactant>
    <interactant intactId="EBI-12353035">
        <id>Q13322-4</id>
        <label>GRB10</label>
    </interactant>
    <organismsDiffer>false</organismsDiffer>
    <experiments>3</experiments>
</comment>
<comment type="interaction">
    <interactant intactId="EBI-79165">
        <id>Q9NRD5</id>
    </interactant>
    <interactant intactId="EBI-11991632">
        <id>Q14451-3</id>
        <label>GRB7</label>
    </interactant>
    <organismsDiffer>false</organismsDiffer>
    <experiments>3</experiments>
</comment>
<comment type="interaction">
    <interactant intactId="EBI-79165">
        <id>Q9NRD5</id>
    </interactant>
    <interactant intactId="EBI-5235612">
        <id>A8MXD5</id>
        <label>GRXCR1</label>
    </interactant>
    <organismsDiffer>false</organismsDiffer>
    <experiments>3</experiments>
</comment>
<comment type="interaction">
    <interactant intactId="EBI-79165">
        <id>Q9NRD5</id>
    </interactant>
    <interactant intactId="EBI-2853321">
        <id>P29084</id>
        <label>GTF2E2</label>
    </interactant>
    <organismsDiffer>false</organismsDiffer>
    <experiments>3</experiments>
</comment>
<comment type="interaction">
    <interactant intactId="EBI-79165">
        <id>Q9NRD5</id>
    </interactant>
    <interactant intactId="EBI-6115579">
        <id>Q9BX10</id>
        <label>GTPBP2</label>
    </interactant>
    <organismsDiffer>false</organismsDiffer>
    <experiments>3</experiments>
</comment>
<comment type="interaction">
    <interactant intactId="EBI-79165">
        <id>Q9NRD5</id>
    </interactant>
    <interactant intactId="EBI-11953488">
        <id>P56524-2</id>
        <label>HDAC4</label>
    </interactant>
    <organismsDiffer>false</organismsDiffer>
    <experiments>3</experiments>
</comment>
<comment type="interaction">
    <interactant intactId="EBI-79165">
        <id>Q9NRD5</id>
    </interactant>
    <interactant intactId="EBI-5460660">
        <id>Q96MH2</id>
        <label>HEXIM2</label>
    </interactant>
    <organismsDiffer>false</organismsDiffer>
    <experiments>3</experiments>
</comment>
<comment type="interaction">
    <interactant intactId="EBI-79165">
        <id>Q9NRD5</id>
    </interactant>
    <interactant intactId="EBI-2549423">
        <id>Q6NT76</id>
        <label>HMBOX1</label>
    </interactant>
    <organismsDiffer>false</organismsDiffer>
    <experiments>3</experiments>
</comment>
<comment type="interaction">
    <interactant intactId="EBI-79165">
        <id>Q9NRD5</id>
    </interactant>
    <interactant intactId="EBI-9090148">
        <id>P08397</id>
        <label>HMBS</label>
    </interactant>
    <organismsDiffer>false</organismsDiffer>
    <experiments>3</experiments>
</comment>
<comment type="interaction">
    <interactant intactId="EBI-79165">
        <id>Q9NRD5</id>
    </interactant>
    <interactant intactId="EBI-740641">
        <id>Q9NP66</id>
        <label>HMG20A</label>
    </interactant>
    <organismsDiffer>false</organismsDiffer>
    <experiments>6</experiments>
</comment>
<comment type="interaction">
    <interactant intactId="EBI-79165">
        <id>Q9NRD5</id>
    </interactant>
    <interactant intactId="EBI-10295883">
        <id>Q9BPY8</id>
        <label>HOPX</label>
    </interactant>
    <organismsDiffer>false</organismsDiffer>
    <experiments>3</experiments>
</comment>
<comment type="interaction">
    <interactant intactId="EBI-79165">
        <id>Q9NRD5</id>
    </interactant>
    <interactant intactId="EBI-8470697">
        <id>P20719</id>
        <label>HOXA5</label>
    </interactant>
    <organismsDiffer>false</organismsDiffer>
    <experiments>3</experiments>
</comment>
<comment type="interaction">
    <interactant intactId="EBI-79165">
        <id>Q9NRD5</id>
    </interactant>
    <interactant intactId="EBI-742664">
        <id>Q9BPX1</id>
        <label>HSD17B14</label>
    </interactant>
    <organismsDiffer>false</organismsDiffer>
    <experiments>3</experiments>
</comment>
<comment type="interaction">
    <interactant intactId="EBI-79165">
        <id>Q9NRD5</id>
    </interactant>
    <interactant intactId="EBI-2556750">
        <id>Q03933</id>
        <label>HSF2</label>
    </interactant>
    <organismsDiffer>false</organismsDiffer>
    <experiments>6</experiments>
</comment>
<comment type="interaction">
    <interactant intactId="EBI-79165">
        <id>Q9NRD5</id>
    </interactant>
    <interactant intactId="EBI-7116203">
        <id>O75031</id>
        <label>HSF2BP</label>
    </interactant>
    <organismsDiffer>false</organismsDiffer>
    <experiments>3</experiments>
</comment>
<comment type="interaction">
    <interactant intactId="EBI-79165">
        <id>Q9NRD5</id>
    </interactant>
    <interactant intactId="EBI-466029">
        <id>P42858</id>
        <label>HTT</label>
    </interactant>
    <organismsDiffer>false</organismsDiffer>
    <experiments>3</experiments>
</comment>
<comment type="interaction">
    <interactant intactId="EBI-79165">
        <id>Q9NRD5</id>
    </interactant>
    <interactant intactId="EBI-713450">
        <id>Q02363</id>
        <label>ID2</label>
    </interactant>
    <organismsDiffer>false</organismsDiffer>
    <experiments>3</experiments>
</comment>
<comment type="interaction">
    <interactant intactId="EBI-79165">
        <id>Q9NRD5</id>
    </interactant>
    <interactant intactId="EBI-8638439">
        <id>Q8IYA8</id>
        <label>IHO1</label>
    </interactant>
    <organismsDiffer>false</organismsDiffer>
    <experiments>3</experiments>
</comment>
<comment type="interaction">
    <interactant intactId="EBI-79165">
        <id>Q9NRD5</id>
    </interactant>
    <interactant intactId="EBI-17178971">
        <id>Q14005-2</id>
        <label>IL16</label>
    </interactant>
    <organismsDiffer>false</organismsDiffer>
    <experiments>3</experiments>
</comment>
<comment type="interaction">
    <interactant intactId="EBI-79165">
        <id>Q9NRD5</id>
    </interactant>
    <interactant intactId="EBI-357925">
        <id>Q12905</id>
        <label>ILF2</label>
    </interactant>
    <organismsDiffer>false</organismsDiffer>
    <experiments>3</experiments>
</comment>
<comment type="interaction">
    <interactant intactId="EBI-79165">
        <id>Q9NRD5</id>
    </interactant>
    <interactant intactId="EBI-715611">
        <id>Q9C086</id>
        <label>INO80B</label>
    </interactant>
    <organismsDiffer>false</organismsDiffer>
    <experiments>3</experiments>
</comment>
<comment type="interaction">
    <interactant intactId="EBI-79165">
        <id>Q9NRD5</id>
    </interactant>
    <interactant intactId="EBI-769401">
        <id>Q8NBZ0</id>
        <label>INO80E</label>
    </interactant>
    <organismsDiffer>false</organismsDiffer>
    <experiments>3</experiments>
</comment>
<comment type="interaction">
    <interactant intactId="EBI-79165">
        <id>Q9NRD5</id>
    </interactant>
    <interactant intactId="EBI-10236940">
        <id>Q15735</id>
        <label>INPP5J</label>
    </interactant>
    <organismsDiffer>false</organismsDiffer>
    <experiments>3</experiments>
</comment>
<comment type="interaction">
    <interactant intactId="EBI-79165">
        <id>Q9NRD5</id>
    </interactant>
    <interactant intactId="EBI-751911">
        <id>Q92551</id>
        <label>IP6K1</label>
    </interactant>
    <organismsDiffer>false</organismsDiffer>
    <experiments>3</experiments>
</comment>
<comment type="interaction">
    <interactant intactId="EBI-79165">
        <id>Q9NRD5</id>
    </interactant>
    <interactant intactId="EBI-1047335">
        <id>Q9H1K1</id>
        <label>ISCU</label>
    </interactant>
    <organismsDiffer>false</organismsDiffer>
    <experiments>3</experiments>
</comment>
<comment type="interaction">
    <interactant intactId="EBI-79165">
        <id>Q9NRD5</id>
    </interactant>
    <interactant intactId="EBI-17181882">
        <id>O75564-2</id>
        <label>JRK</label>
    </interactant>
    <organismsDiffer>false</organismsDiffer>
    <experiments>3</experiments>
</comment>
<comment type="interaction">
    <interactant intactId="EBI-79165">
        <id>Q9NRD5</id>
    </interactant>
    <interactant intactId="EBI-399080">
        <id>Q92993</id>
        <label>KAT5</label>
    </interactant>
    <organismsDiffer>false</organismsDiffer>
    <experiments>3</experiments>
</comment>
<comment type="interaction">
    <interactant intactId="EBI-79165">
        <id>Q9NRD5</id>
    </interactant>
    <interactant intactId="EBI-9027502">
        <id>Q719H9</id>
        <label>KCTD1</label>
    </interactant>
    <organismsDiffer>false</organismsDiffer>
    <experiments>3</experiments>
</comment>
<comment type="interaction">
    <interactant intactId="EBI-79165">
        <id>Q9NRD5</id>
    </interactant>
    <interactant intactId="EBI-2511344">
        <id>Q8NC69</id>
        <label>KCTD6</label>
    </interactant>
    <organismsDiffer>false</organismsDiffer>
    <experiments>3</experiments>
</comment>
<comment type="interaction">
    <interactant intactId="EBI-79165">
        <id>Q9NRD5</id>
    </interactant>
    <interactant intactId="EBI-4397613">
        <id>Q7L273</id>
        <label>KCTD9</label>
    </interactant>
    <organismsDiffer>false</organismsDiffer>
    <experiments>3</experiments>
</comment>
<comment type="interaction">
    <interactant intactId="EBI-79165">
        <id>Q9NRD5</id>
    </interactant>
    <interactant intactId="EBI-3437878">
        <id>Q86T90</id>
        <label>KIAA1328</label>
    </interactant>
    <organismsDiffer>false</organismsDiffer>
    <experiments>3</experiments>
</comment>
<comment type="interaction">
    <interactant intactId="EBI-79165">
        <id>Q9NRD5</id>
    </interactant>
    <interactant intactId="EBI-739909">
        <id>Q969R5</id>
        <label>L3MBTL2</label>
    </interactant>
    <organismsDiffer>false</organismsDiffer>
    <experiments>3</experiments>
</comment>
<comment type="interaction">
    <interactant intactId="EBI-79165">
        <id>Q9NRD5</id>
    </interactant>
    <interactant intactId="EBI-10254507">
        <id>Q6UWP7</id>
        <label>LCLAT1</label>
    </interactant>
    <organismsDiffer>false</organismsDiffer>
    <experiments>3</experiments>
</comment>
<comment type="interaction">
    <interactant intactId="EBI-79165">
        <id>Q9NRD5</id>
    </interactant>
    <interactant intactId="EBI-11911016">
        <id>P80188</id>
        <label>LCN2</label>
    </interactant>
    <organismsDiffer>false</organismsDiffer>
    <experiments>3</experiments>
</comment>
<comment type="interaction">
    <interactant intactId="EBI-79165">
        <id>Q9NRD5</id>
    </interactant>
    <interactant intactId="EBI-10274069">
        <id>Q8TCE9</id>
        <label>LGALS14</label>
    </interactant>
    <organismsDiffer>false</organismsDiffer>
    <experiments>3</experiments>
</comment>
<comment type="interaction">
    <interactant intactId="EBI-79165">
        <id>Q9NRD5</id>
    </interactant>
    <interactant intactId="EBI-8639312">
        <id>P25800</id>
        <label>LMO1</label>
    </interactant>
    <organismsDiffer>false</organismsDiffer>
    <experiments>3</experiments>
</comment>
<comment type="interaction">
    <interactant intactId="EBI-79165">
        <id>Q9NRD5</id>
    </interactant>
    <interactant intactId="EBI-11742507">
        <id>Q8TAP4-4</id>
        <label>LMO3</label>
    </interactant>
    <organismsDiffer>false</organismsDiffer>
    <experiments>3</experiments>
</comment>
<comment type="interaction">
    <interactant intactId="EBI-79165">
        <id>Q9NRD5</id>
    </interactant>
    <interactant intactId="EBI-2341787">
        <id>Q17RB8</id>
        <label>LONRF1</label>
    </interactant>
    <organismsDiffer>false</organismsDiffer>
    <experiments>3</experiments>
</comment>
<comment type="interaction">
    <interactant intactId="EBI-79165">
        <id>Q9NRD5</id>
    </interactant>
    <interactant intactId="EBI-12003882">
        <id>Q5JTD7</id>
        <label>LRRC73</label>
    </interactant>
    <organismsDiffer>false</organismsDiffer>
    <experiments>3</experiments>
</comment>
<comment type="interaction">
    <interactant intactId="EBI-79165">
        <id>Q9NRD5</id>
    </interactant>
    <interactant intactId="EBI-2824799">
        <id>Q9NQ48</id>
        <label>LZTFL1</label>
    </interactant>
    <organismsDiffer>false</organismsDiffer>
    <experiments>5</experiments>
</comment>
<comment type="interaction">
    <interactant intactId="EBI-79165">
        <id>Q9NRD5</id>
    </interactant>
    <interactant intactId="EBI-1216080">
        <id>Q9Y250</id>
        <label>LZTS1</label>
    </interactant>
    <organismsDiffer>false</organismsDiffer>
    <experiments>3</experiments>
</comment>
<comment type="interaction">
    <interactant intactId="EBI-79165">
        <id>Q9NRD5</id>
    </interactant>
    <interactant intactId="EBI-743122">
        <id>P43358</id>
        <label>MAGEA4</label>
    </interactant>
    <organismsDiffer>false</organismsDiffer>
    <experiments>3</experiments>
</comment>
<comment type="interaction">
    <interactant intactId="EBI-79165">
        <id>Q9NRD5</id>
    </interactant>
    <interactant intactId="EBI-751857">
        <id>O15481</id>
        <label>MAGEB4</label>
    </interactant>
    <organismsDiffer>false</organismsDiffer>
    <experiments>3</experiments>
</comment>
<comment type="interaction">
    <interactant intactId="EBI-79165">
        <id>Q9NRD5</id>
    </interactant>
    <interactant intactId="EBI-448135">
        <id>P52564</id>
        <label>MAP2K6</label>
    </interactant>
    <organismsDiffer>false</organismsDiffer>
    <experiments>3</experiments>
</comment>
<comment type="interaction">
    <interactant intactId="EBI-79165">
        <id>Q9NRD5</id>
    </interactant>
    <interactant intactId="EBI-713568">
        <id>P45984</id>
        <label>MAPK9</label>
    </interactant>
    <organismsDiffer>false</organismsDiffer>
    <experiments>3</experiments>
</comment>
<comment type="interaction">
    <interactant intactId="EBI-79165">
        <id>Q9NRD5</id>
    </interactant>
    <interactant intactId="EBI-726739">
        <id>Q9UPY8</id>
        <label>MAPRE3</label>
    </interactant>
    <organismsDiffer>false</organismsDiffer>
    <experiments>3</experiments>
</comment>
<comment type="interaction">
    <interactant intactId="EBI-79165">
        <id>Q9NRD5</id>
    </interactant>
    <interactant intactId="EBI-12068586">
        <id>P56270-2</id>
        <label>MAZ</label>
    </interactant>
    <organismsDiffer>false</organismsDiffer>
    <experiments>3</experiments>
</comment>
<comment type="interaction">
    <interactant intactId="EBI-79165">
        <id>Q9NRD5</id>
    </interactant>
    <interactant intactId="EBI-11978579">
        <id>O95983-2</id>
        <label>MBD3</label>
    </interactant>
    <organismsDiffer>false</organismsDiffer>
    <experiments>3</experiments>
</comment>
<comment type="interaction">
    <interactant intactId="EBI-79165">
        <id>Q9NRD5</id>
    </interactant>
    <interactant intactId="EBI-10233517">
        <id>Q7L590-2</id>
        <label>MCM10</label>
    </interactant>
    <organismsDiffer>false</organismsDiffer>
    <experiments>3</experiments>
</comment>
<comment type="interaction">
    <interactant intactId="EBI-79165">
        <id>Q9NRD5</id>
    </interactant>
    <interactant intactId="EBI-16439278">
        <id>Q6FHY5</id>
        <label>MEOX2</label>
    </interactant>
    <organismsDiffer>false</organismsDiffer>
    <experiments>3</experiments>
</comment>
<comment type="interaction">
    <interactant intactId="EBI-79165">
        <id>Q9NRD5</id>
    </interactant>
    <interactant intactId="EBI-14086479">
        <id>Q8IVT4</id>
        <label>MGC50722</label>
    </interactant>
    <organismsDiffer>false</organismsDiffer>
    <experiments>3</experiments>
</comment>
<comment type="interaction">
    <interactant intactId="EBI-79165">
        <id>Q9NRD5</id>
    </interactant>
    <interactant intactId="EBI-739561">
        <id>Q9BQP7</id>
        <label>MGME1</label>
    </interactant>
    <organismsDiffer>false</organismsDiffer>
    <experiments>3</experiments>
</comment>
<comment type="interaction">
    <interactant intactId="EBI-79165">
        <id>Q9NRD5</id>
    </interactant>
    <interactant intactId="EBI-10172526">
        <id>Q9UJV3-2</id>
        <label>MID2</label>
    </interactant>
    <organismsDiffer>false</organismsDiffer>
    <experiments>3</experiments>
</comment>
<comment type="interaction">
    <interactant intactId="EBI-79165">
        <id>Q9NRD5</id>
    </interactant>
    <interactant intactId="EBI-742459">
        <id>Q9BU76</id>
        <label>MMTAG2</label>
    </interactant>
    <organismsDiffer>false</organismsDiffer>
    <experiments>3</experiments>
</comment>
<comment type="interaction">
    <interactant intactId="EBI-79165">
        <id>Q9NRD5</id>
    </interactant>
    <interactant intactId="EBI-743811">
        <id>Q8NEH6</id>
        <label>MNS1</label>
    </interactant>
    <organismsDiffer>false</organismsDiffer>
    <experiments>3</experiments>
</comment>
<comment type="interaction">
    <interactant intactId="EBI-79165">
        <id>Q9NRD5</id>
    </interactant>
    <interactant intactId="EBI-9679267">
        <id>Q70IA8</id>
        <label>MOB3C</label>
    </interactant>
    <organismsDiffer>false</organismsDiffer>
    <experiments>3</experiments>
</comment>
<comment type="interaction">
    <interactant intactId="EBI-79165">
        <id>Q9NRD5</id>
    </interactant>
    <interactant intactId="EBI-10288852">
        <id>Q9UBU8-2</id>
        <label>MORF4L1</label>
    </interactant>
    <organismsDiffer>false</organismsDiffer>
    <experiments>3</experiments>
</comment>
<comment type="interaction">
    <interactant intactId="EBI-79165">
        <id>Q9NRD5</id>
    </interactant>
    <interactant intactId="EBI-399257">
        <id>Q15014</id>
        <label>MORF4L2</label>
    </interactant>
    <organismsDiffer>false</organismsDiffer>
    <experiments>3</experiments>
</comment>
<comment type="interaction">
    <interactant intactId="EBI-79165">
        <id>Q9NRD5</id>
    </interactant>
    <interactant intactId="EBI-9675802">
        <id>Q6PF18</id>
        <label>MORN3</label>
    </interactant>
    <organismsDiffer>false</organismsDiffer>
    <experiments>3</experiments>
</comment>
<comment type="interaction">
    <interactant intactId="EBI-79165">
        <id>Q9NRD5</id>
    </interactant>
    <interactant intactId="EBI-1757866">
        <id>P00540</id>
        <label>MOS</label>
    </interactant>
    <organismsDiffer>false</organismsDiffer>
    <experiments>3</experiments>
</comment>
<comment type="interaction">
    <interactant intactId="EBI-79165">
        <id>Q9NRD5</id>
    </interactant>
    <interactant intactId="EBI-747381">
        <id>Q9BV20</id>
        <label>MRI1</label>
    </interactant>
    <organismsDiffer>false</organismsDiffer>
    <experiments>3</experiments>
</comment>
<comment type="interaction">
    <interactant intactId="EBI-79165">
        <id>Q9NRD5</id>
    </interactant>
    <interactant intactId="EBI-2857471">
        <id>Q6NTE8</id>
        <label>MRNIP</label>
    </interactant>
    <organismsDiffer>false</organismsDiffer>
    <experiments>3</experiments>
</comment>
<comment type="interaction">
    <interactant intactId="EBI-79165">
        <id>Q9NRD5</id>
    </interactant>
    <interactant intactId="EBI-10699187">
        <id>Q8IXL7-2</id>
        <label>MSRB3</label>
    </interactant>
    <organismsDiffer>false</organismsDiffer>
    <experiments>3</experiments>
</comment>
<comment type="interaction">
    <interactant intactId="EBI-79165">
        <id>Q9NRD5</id>
    </interactant>
    <interactant intactId="EBI-11599933">
        <id>Q4VC12</id>
        <label>MSS51</label>
    </interactant>
    <organismsDiffer>false</organismsDiffer>
    <experiments>3</experiments>
</comment>
<comment type="interaction">
    <interactant intactId="EBI-79165">
        <id>Q9NRD5</id>
    </interactant>
    <interactant intactId="EBI-714236">
        <id>Q13330</id>
        <label>MTA1</label>
    </interactant>
    <organismsDiffer>false</organismsDiffer>
    <experiments>3</experiments>
</comment>
<comment type="interaction">
    <interactant intactId="EBI-79165">
        <id>Q9NRD5</id>
    </interactant>
    <interactant intactId="EBI-2602570">
        <id>Q9BT17</id>
        <label>MTG1</label>
    </interactant>
    <organismsDiffer>false</organismsDiffer>
    <experiments>3</experiments>
</comment>
<comment type="interaction">
    <interactant intactId="EBI-79165">
        <id>Q9NRD5</id>
    </interactant>
    <interactant intactId="EBI-8656665">
        <id>Q8N6N6</id>
        <label>NATD1</label>
    </interactant>
    <organismsDiffer>false</organismsDiffer>
    <experiments>3</experiments>
</comment>
<comment type="interaction">
    <interactant intactId="EBI-79165">
        <id>Q9NRD5</id>
    </interactant>
    <interactant intactId="EBI-928842">
        <id>Q9GZM8</id>
        <label>NDEL1</label>
    </interactant>
    <organismsDiffer>false</organismsDiffer>
    <experiments>3</experiments>
</comment>
<comment type="interaction">
    <interactant intactId="EBI-79165">
        <id>Q9NRD5</id>
    </interactant>
    <interactant intactId="EBI-10172876">
        <id>Q7Z6G3-2</id>
        <label>NECAB2</label>
    </interactant>
    <organismsDiffer>false</organismsDiffer>
    <experiments>3</experiments>
</comment>
<comment type="interaction">
    <interactant intactId="EBI-79165">
        <id>Q9NRD5</id>
    </interactant>
    <interactant intactId="EBI-11750983">
        <id>Q9HC98-4</id>
        <label>NEK6</label>
    </interactant>
    <organismsDiffer>false</organismsDiffer>
    <experiments>3</experiments>
</comment>
<comment type="interaction">
    <interactant intactId="EBI-79165">
        <id>Q9NRD5</id>
    </interactant>
    <interactant intactId="EBI-744782">
        <id>Q9Y5B8</id>
        <label>NME7</label>
    </interactant>
    <organismsDiffer>false</organismsDiffer>
    <experiments>3</experiments>
</comment>
<comment type="interaction">
    <interactant intactId="EBI-79165">
        <id>Q9NRD5</id>
    </interactant>
    <interactant intactId="EBI-3917542">
        <id>Q9HAN9</id>
        <label>NMNAT1</label>
    </interactant>
    <organismsDiffer>false</organismsDiffer>
    <experiments>3</experiments>
</comment>
<comment type="interaction">
    <interactant intactId="EBI-79165">
        <id>Q9NRD5</id>
    </interactant>
    <interactant intactId="EBI-395927">
        <id>Q9BVI4</id>
        <label>NOC4L</label>
    </interactant>
    <organismsDiffer>false</organismsDiffer>
    <experiments>3</experiments>
</comment>
<comment type="interaction">
    <interactant intactId="EBI-79165">
        <id>Q9NRD5</id>
    </interactant>
    <interactant intactId="EBI-8502288">
        <id>Q9Y530</id>
        <label>OARD1</label>
    </interactant>
    <organismsDiffer>false</organismsDiffer>
    <experiments>3</experiments>
</comment>
<comment type="interaction">
    <interactant intactId="EBI-79165">
        <id>Q9NRD5</id>
    </interactant>
    <interactant intactId="EBI-748974">
        <id>Q96CV9</id>
        <label>OPTN</label>
    </interactant>
    <organismsDiffer>false</organismsDiffer>
    <experiments>3</experiments>
</comment>
<comment type="interaction">
    <interactant intactId="EBI-79165">
        <id>Q9NRD5</id>
    </interactant>
    <interactant intactId="EBI-12211505">
        <id>Q969R2-2</id>
        <label>OSBP2</label>
    </interactant>
    <organismsDiffer>false</organismsDiffer>
    <experiments>3</experiments>
</comment>
<comment type="interaction">
    <interactant intactId="EBI-79165">
        <id>Q9NRD5</id>
    </interactant>
    <interactant intactId="EBI-9057006">
        <id>Q9UJX0</id>
        <label>OSGIN1</label>
    </interactant>
    <organismsDiffer>false</organismsDiffer>
    <experiments>3</experiments>
</comment>
<comment type="interaction">
    <interactant intactId="EBI-79165">
        <id>Q9NRD5</id>
    </interactant>
    <interactant intactId="EBI-711522">
        <id>Q15102</id>
        <label>PAFAH1B3</label>
    </interactant>
    <organismsDiffer>false</organismsDiffer>
    <experiments>3</experiments>
</comment>
<comment type="interaction">
    <interactant intactId="EBI-79165">
        <id>Q9NRD5</id>
    </interactant>
    <interactant intactId="EBI-747278">
        <id>P26367</id>
        <label>PAX6</label>
    </interactant>
    <organismsDiffer>false</organismsDiffer>
    <experiments>3</experiments>
</comment>
<comment type="interaction">
    <interactant intactId="EBI-79165">
        <id>Q9NRD5</id>
    </interactant>
    <interactant intactId="EBI-10302990">
        <id>Q9BYU1</id>
        <label>PBX4</label>
    </interactant>
    <organismsDiffer>false</organismsDiffer>
    <experiments>3</experiments>
</comment>
<comment type="interaction">
    <interactant intactId="EBI-79165">
        <id>Q9NRD5</id>
    </interactant>
    <interactant intactId="EBI-740475">
        <id>P61457</id>
        <label>PCBD1</label>
    </interactant>
    <organismsDiffer>false</organismsDiffer>
    <experiments>3</experiments>
</comment>
<comment type="interaction">
    <interactant intactId="EBI-79165">
        <id>Q9NRD5</id>
    </interactant>
    <interactant intactId="EBI-712290">
        <id>O14737</id>
        <label>PDCD5</label>
    </interactant>
    <organismsDiffer>false</organismsDiffer>
    <experiments>3</experiments>
</comment>
<comment type="interaction">
    <interactant intactId="EBI-79165">
        <id>Q9NRD5</id>
    </interactant>
    <interactant intactId="EBI-12067280">
        <id>Q29RF7-3</id>
        <label>PDS5A</label>
    </interactant>
    <organismsDiffer>false</organismsDiffer>
    <experiments>3</experiments>
</comment>
<comment type="interaction">
    <interactant intactId="EBI-79165">
        <id>Q9NRD5</id>
    </interactant>
    <interactant intactId="EBI-716384">
        <id>P30086</id>
        <label>PEBP1</label>
    </interactant>
    <organismsDiffer>false</organismsDiffer>
    <experiments>3</experiments>
</comment>
<comment type="interaction">
    <interactant intactId="EBI-79165">
        <id>Q9NRD5</id>
    </interactant>
    <interactant intactId="EBI-2339674">
        <id>Q5T6S3</id>
        <label>PHF19</label>
    </interactant>
    <organismsDiffer>false</organismsDiffer>
    <experiments>3</experiments>
</comment>
<comment type="interaction">
    <interactant intactId="EBI-79165">
        <id>Q9NRD5</id>
    </interactant>
    <interactant intactId="EBI-14066006">
        <id>Q4G0R1</id>
        <label>PIBF1</label>
    </interactant>
    <organismsDiffer>false</organismsDiffer>
    <experiments>3</experiments>
</comment>
<comment type="interaction">
    <interactant intactId="EBI-79165">
        <id>Q9NRD5</id>
    </interactant>
    <interactant intactId="EBI-79165">
        <id>Q9NRD5</id>
        <label>PICK1</label>
    </interactant>
    <organismsDiffer>false</organismsDiffer>
    <experiments>3</experiments>
</comment>
<comment type="interaction">
    <interactant intactId="EBI-79165">
        <id>Q9NRD5</id>
    </interactant>
    <interactant intactId="EBI-602382">
        <id>Q16512</id>
        <label>PKN1</label>
    </interactant>
    <organismsDiffer>false</organismsDiffer>
    <experiments>3</experiments>
</comment>
<comment type="interaction">
    <interactant intactId="EBI-79165">
        <id>Q9NRD5</id>
    </interactant>
    <interactant intactId="EBI-2692890">
        <id>Q96KN3</id>
        <label>PKNOX2</label>
    </interactant>
    <organismsDiffer>false</organismsDiffer>
    <experiments>3</experiments>
</comment>
<comment type="interaction">
    <interactant intactId="EBI-79165">
        <id>Q9NRD5</id>
    </interactant>
    <interactant intactId="EBI-12069346">
        <id>Q6IQ23-2</id>
        <label>PLEKHA7</label>
    </interactant>
    <organismsDiffer>false</organismsDiffer>
    <experiments>3</experiments>
</comment>
<comment type="interaction">
    <interactant intactId="EBI-79165">
        <id>Q9NRD5</id>
    </interactant>
    <interactant intactId="EBI-1045072">
        <id>Q96T60</id>
        <label>PNKP</label>
    </interactant>
    <organismsDiffer>false</organismsDiffer>
    <experiments>3</experiments>
</comment>
<comment type="interaction">
    <interactant intactId="EBI-79165">
        <id>Q9NRD5</id>
    </interactant>
    <interactant intactId="EBI-712787">
        <id>Q9NRX1</id>
        <label>PNO1</label>
    </interactant>
    <organismsDiffer>false</organismsDiffer>
    <experiments>3</experiments>
</comment>
<comment type="interaction">
    <interactant intactId="EBI-79165">
        <id>Q9NRD5</id>
    </interactant>
    <interactant intactId="EBI-10320765">
        <id>Q9UGP5-2</id>
        <label>POLL</label>
    </interactant>
    <organismsDiffer>false</organismsDiffer>
    <experiments>3</experiments>
</comment>
<comment type="interaction">
    <interactant intactId="EBI-79165">
        <id>Q9NRD5</id>
    </interactant>
    <interactant intactId="EBI-5452779">
        <id>Q9BUI4</id>
        <label>POLR3C</label>
    </interactant>
    <organismsDiffer>false</organismsDiffer>
    <experiments>3</experiments>
</comment>
<comment type="interaction">
    <interactant intactId="EBI-79165">
        <id>Q9NRD5</id>
    </interactant>
    <interactant intactId="EBI-368321">
        <id>O60437</id>
        <label>PPL</label>
    </interactant>
    <organismsDiffer>false</organismsDiffer>
    <experiments>3</experiments>
</comment>
<comment type="interaction">
    <interactant intactId="EBI-79165">
        <id>Q9NRD5</id>
    </interactant>
    <interactant intactId="EBI-2798416">
        <id>Q99633</id>
        <label>PRPF18</label>
    </interactant>
    <organismsDiffer>false</organismsDiffer>
    <experiments>3</experiments>
</comment>
<comment type="interaction">
    <interactant intactId="EBI-79165">
        <id>Q9NRD5</id>
    </interactant>
    <interactant intactId="EBI-1567797">
        <id>Q8WWY3</id>
        <label>PRPF31</label>
    </interactant>
    <organismsDiffer>false</organismsDiffer>
    <experiments>3</experiments>
</comment>
<comment type="interaction">
    <interactant intactId="EBI-79165">
        <id>Q9NRD5</id>
    </interactant>
    <interactant intactId="EBI-5280197">
        <id>O75400-2</id>
        <label>PRPF40A</label>
    </interactant>
    <organismsDiffer>false</organismsDiffer>
    <experiments>3</experiments>
</comment>
<comment type="interaction">
    <interactant intactId="EBI-79165">
        <id>Q9NRD5</id>
    </interactant>
    <interactant intactId="EBI-359352">
        <id>P25786</id>
        <label>PSMA1</label>
    </interactant>
    <organismsDiffer>false</organismsDiffer>
    <experiments>3</experiments>
</comment>
<comment type="interaction">
    <interactant intactId="EBI-79165">
        <id>Q9NRD5</id>
    </interactant>
    <interactant intactId="EBI-355546">
        <id>P61289</id>
        <label>PSME3</label>
    </interactant>
    <organismsDiffer>false</organismsDiffer>
    <experiments>3</experiments>
</comment>
<comment type="interaction">
    <interactant intactId="EBI-79165">
        <id>Q9NRD5</id>
    </interactant>
    <interactant intactId="EBI-696162">
        <id>P60484</id>
        <label>PTEN</label>
    </interactant>
    <organismsDiffer>false</organismsDiffer>
    <experiments>2</experiments>
</comment>
<comment type="interaction">
    <interactant intactId="EBI-79165">
        <id>Q9NRD5</id>
    </interactant>
    <interactant intactId="EBI-2602515">
        <id>Q86Y79</id>
        <label>PTRH1</label>
    </interactant>
    <organismsDiffer>false</organismsDiffer>
    <experiments>3</experiments>
</comment>
<comment type="interaction">
    <interactant intactId="EBI-79165">
        <id>Q9NRD5</id>
    </interactant>
    <interactant intactId="EBI-347462">
        <id>P47897</id>
        <label>QARS1</label>
    </interactant>
    <organismsDiffer>false</organismsDiffer>
    <experiments>3</experiments>
</comment>
<comment type="interaction">
    <interactant intactId="EBI-79165">
        <id>Q9NRD5</id>
    </interactant>
    <interactant intactId="EBI-1055693">
        <id>O75771</id>
        <label>RAD51D</label>
    </interactant>
    <organismsDiffer>false</organismsDiffer>
    <experiments>3</experiments>
</comment>
<comment type="interaction">
    <interactant intactId="EBI-79165">
        <id>Q9NRD5</id>
    </interactant>
    <interactant intactId="EBI-3437896">
        <id>Q86YV0</id>
        <label>RASAL3</label>
    </interactant>
    <organismsDiffer>false</organismsDiffer>
    <experiments>3</experiments>
</comment>
<comment type="interaction">
    <interactant intactId="EBI-79165">
        <id>Q9NRD5</id>
    </interactant>
    <interactant intactId="EBI-14065960">
        <id>Q96HR9-2</id>
        <label>REEP6</label>
    </interactant>
    <organismsDiffer>false</organismsDiffer>
    <experiments>3</experiments>
</comment>
<comment type="interaction">
    <interactant intactId="EBI-79165">
        <id>Q9NRD5</id>
    </interactant>
    <interactant intactId="EBI-10829018">
        <id>Q04864-2</id>
        <label>REL</label>
    </interactant>
    <organismsDiffer>false</organismsDiffer>
    <experiments>3</experiments>
</comment>
<comment type="interaction">
    <interactant intactId="EBI-79165">
        <id>Q9NRD5</id>
    </interactant>
    <interactant intactId="EBI-1055010">
        <id>P40938</id>
        <label>RFC3</label>
    </interactant>
    <organismsDiffer>false</organismsDiffer>
    <experiments>3</experiments>
</comment>
<comment type="interaction">
    <interactant intactId="EBI-79165">
        <id>Q9NRD5</id>
    </interactant>
    <interactant intactId="EBI-3909436">
        <id>Q9UJD0</id>
        <label>RIMS3</label>
    </interactant>
    <organismsDiffer>false</organismsDiffer>
    <experiments>3</experiments>
</comment>
<comment type="interaction">
    <interactant intactId="EBI-79165">
        <id>Q9NRD5</id>
    </interactant>
    <interactant intactId="EBI-366017">
        <id>Q13671</id>
        <label>RIN1</label>
    </interactant>
    <organismsDiffer>false</organismsDiffer>
    <experiments>3</experiments>
</comment>
<comment type="interaction">
    <interactant intactId="EBI-79165">
        <id>Q9NRD5</id>
    </interactant>
    <interactant intactId="EBI-373337">
        <id>O76064</id>
        <label>RNF8</label>
    </interactant>
    <organismsDiffer>false</organismsDiffer>
    <experiments>3</experiments>
</comment>
<comment type="interaction">
    <interactant intactId="EBI-79165">
        <id>Q9NRD5</id>
    </interactant>
    <interactant intactId="EBI-395959">
        <id>Q15287</id>
        <label>RNPS1</label>
    </interactant>
    <organismsDiffer>false</organismsDiffer>
    <experiments>3</experiments>
</comment>
<comment type="interaction">
    <interactant intactId="EBI-79165">
        <id>Q9NRD5</id>
    </interactant>
    <interactant intactId="EBI-10288358">
        <id>Q96HH0</id>
        <label>ROBO3</label>
    </interactant>
    <organismsDiffer>false</organismsDiffer>
    <experiments>3</experiments>
</comment>
<comment type="interaction">
    <interactant intactId="EBI-79165">
        <id>Q9NRD5</id>
    </interactant>
    <interactant intactId="EBI-1378139">
        <id>Q9HAT0</id>
        <label>ROPN1</label>
    </interactant>
    <organismsDiffer>false</organismsDiffer>
    <experiments>3</experiments>
</comment>
<comment type="interaction">
    <interactant intactId="EBI-79165">
        <id>Q9NRD5</id>
    </interactant>
    <interactant intactId="EBI-744831">
        <id>P49247</id>
        <label>RPIA</label>
    </interactant>
    <organismsDiffer>false</organismsDiffer>
    <experiments>3</experiments>
</comment>
<comment type="interaction">
    <interactant intactId="EBI-79165">
        <id>Q9NRD5</id>
    </interactant>
    <interactant intactId="EBI-366570">
        <id>Q9BUL9</id>
        <label>RPP25</label>
    </interactant>
    <organismsDiffer>false</organismsDiffer>
    <experiments>3</experiments>
</comment>
<comment type="interaction">
    <interactant intactId="EBI-79165">
        <id>Q9NRD5</id>
    </interactant>
    <interactant intactId="EBI-2008793">
        <id>O43159</id>
        <label>RRP8</label>
    </interactant>
    <organismsDiffer>false</organismsDiffer>
    <experiments>3</experiments>
</comment>
<comment type="interaction">
    <interactant intactId="EBI-79165">
        <id>Q9NRD5</id>
    </interactant>
    <interactant intactId="EBI-748576">
        <id>P28702</id>
        <label>RXRB</label>
    </interactant>
    <organismsDiffer>false</organismsDiffer>
    <experiments>3</experiments>
</comment>
<comment type="interaction">
    <interactant intactId="EBI-79165">
        <id>Q9NRD5</id>
    </interactant>
    <interactant intactId="EBI-712405">
        <id>P48443</id>
        <label>RXRG</label>
    </interactant>
    <organismsDiffer>false</organismsDiffer>
    <experiments>3</experiments>
</comment>
<comment type="interaction">
    <interactant intactId="EBI-79165">
        <id>Q9NRD5</id>
    </interactant>
    <interactant intactId="EBI-745846">
        <id>P57086</id>
        <label>SCAND1</label>
    </interactant>
    <organismsDiffer>false</organismsDiffer>
    <experiments>3</experiments>
</comment>
<comment type="interaction">
    <interactant intactId="EBI-79165">
        <id>Q9NRD5</id>
    </interactant>
    <interactant intactId="EBI-748391">
        <id>Q9BWG6</id>
        <label>SCNM1</label>
    </interactant>
    <organismsDiffer>false</organismsDiffer>
    <experiments>3</experiments>
</comment>
<comment type="interaction">
    <interactant intactId="EBI-79165">
        <id>Q9NRD5</id>
    </interactant>
    <interactant intactId="EBI-11017428">
        <id>Q13214-2</id>
        <label>SEMA3B</label>
    </interactant>
    <organismsDiffer>false</organismsDiffer>
    <experiments>3</experiments>
</comment>
<comment type="interaction">
    <interactant intactId="EBI-79165">
        <id>Q9NRD5</id>
    </interactant>
    <interactant intactId="EBI-693002">
        <id>Q8WYJ6</id>
        <label>SEPTIN1</label>
    </interactant>
    <organismsDiffer>false</organismsDiffer>
    <experiments>3</experiments>
</comment>
<comment type="interaction">
    <interactant intactId="EBI-79165">
        <id>Q9NRD5</id>
    </interactant>
    <interactant intactId="EBI-523558">
        <id>Q8NC51</id>
        <label>SERBP1</label>
    </interactant>
    <organismsDiffer>false</organismsDiffer>
    <experiments>3</experiments>
</comment>
<comment type="interaction">
    <interactant intactId="EBI-79165">
        <id>Q9NRD5</id>
    </interactant>
    <interactant intactId="EBI-748601">
        <id>Q9UHV2</id>
        <label>SERTAD1</label>
    </interactant>
    <organismsDiffer>false</organismsDiffer>
    <experiments>3</experiments>
</comment>
<comment type="interaction">
    <interactant intactId="EBI-79165">
        <id>Q9NRD5</id>
    </interactant>
    <interactant intactId="EBI-748621">
        <id>Q9UJW9</id>
        <label>SERTAD3</label>
    </interactant>
    <organismsDiffer>false</organismsDiffer>
    <experiments>3</experiments>
</comment>
<comment type="interaction">
    <interactant intactId="EBI-79165">
        <id>Q9NRD5</id>
    </interactant>
    <interactant intactId="EBI-747035">
        <id>Q9H788</id>
        <label>SH2D4A</label>
    </interactant>
    <organismsDiffer>false</organismsDiffer>
    <experiments>3</experiments>
</comment>
<comment type="interaction">
    <interactant intactId="EBI-79165">
        <id>Q9NRD5</id>
    </interactant>
    <interactant intactId="EBI-749607">
        <id>Q9NR46</id>
        <label>SH3GLB2</label>
    </interactant>
    <organismsDiffer>false</organismsDiffer>
    <experiments>3</experiments>
</comment>
<comment type="interaction">
    <interactant intactId="EBI-79165">
        <id>Q9NRD5</id>
    </interactant>
    <interactant intactId="EBI-1752330">
        <id>Q9BYB0</id>
        <label>SHANK3</label>
    </interactant>
    <organismsDiffer>false</organismsDiffer>
    <experiments>2</experiments>
</comment>
<comment type="interaction">
    <interactant intactId="EBI-79165">
        <id>Q9NRD5</id>
    </interactant>
    <interactant intactId="EBI-11955083">
        <id>Q9NUL5-4</id>
        <label>SHFL</label>
    </interactant>
    <organismsDiffer>false</organismsDiffer>
    <experiments>3</experiments>
</comment>
<comment type="interaction">
    <interactant intactId="EBI-79165">
        <id>Q9NRD5</id>
    </interactant>
    <interactant intactId="EBI-1050793">
        <id>Q9GZT3</id>
        <label>SLIRP</label>
    </interactant>
    <organismsDiffer>false</organismsDiffer>
    <experiments>3</experiments>
</comment>
<comment type="interaction">
    <interactant intactId="EBI-79165">
        <id>Q9NRD5</id>
    </interactant>
    <interactant intactId="EBI-5457304">
        <id>Q9NSI2</id>
        <label>SLX9</label>
    </interactant>
    <organismsDiffer>false</organismsDiffer>
    <experiments>3</experiments>
</comment>
<comment type="interaction">
    <interactant intactId="EBI-79165">
        <id>Q9NRD5</id>
    </interactant>
    <interactant intactId="EBI-679562">
        <id>P51531</id>
        <label>SMARCA2</label>
    </interactant>
    <organismsDiffer>false</organismsDiffer>
    <experiments>2</experiments>
</comment>
<comment type="interaction">
    <interactant intactId="EBI-79165">
        <id>Q9NRD5</id>
    </interactant>
    <interactant intactId="EBI-358436">
        <id>Q12824-2</id>
        <label>SMARCB1</label>
    </interactant>
    <organismsDiffer>false</organismsDiffer>
    <experiments>3</experiments>
</comment>
<comment type="interaction">
    <interactant intactId="EBI-79165">
        <id>Q9NRD5</id>
    </interactant>
    <interactant intactId="EBI-358489">
        <id>Q96GM5</id>
        <label>SMARCD1</label>
    </interactant>
    <organismsDiffer>false</organismsDiffer>
    <experiments>3</experiments>
</comment>
<comment type="interaction">
    <interactant intactId="EBI-79165">
        <id>Q9NRD5</id>
    </interactant>
    <interactant intactId="EBI-9675976">
        <id>Q9BV90</id>
        <label>SNRNP25</label>
    </interactant>
    <organismsDiffer>false</organismsDiffer>
    <experiments>3</experiments>
</comment>
<comment type="interaction">
    <interactant intactId="EBI-79165">
        <id>Q9NRD5</id>
    </interactant>
    <interactant intactId="EBI-876439">
        <id>P09661</id>
        <label>SNRPA1</label>
    </interactant>
    <organismsDiffer>false</organismsDiffer>
    <experiments>3</experiments>
</comment>
<comment type="interaction">
    <interactant intactId="EBI-79165">
        <id>Q9NRD5</id>
    </interactant>
    <interactant intactId="EBI-1053651">
        <id>P08579</id>
        <label>SNRPB2</label>
    </interactant>
    <organismsDiffer>false</organismsDiffer>
    <experiments>3</experiments>
</comment>
<comment type="interaction">
    <interactant intactId="EBI-79165">
        <id>Q9NRD5</id>
    </interactant>
    <interactant intactId="EBI-632715">
        <id>Q13573</id>
        <label>SNW1</label>
    </interactant>
    <organismsDiffer>false</organismsDiffer>
    <experiments>3</experiments>
</comment>
<comment type="interaction">
    <interactant intactId="EBI-79165">
        <id>Q9NRD5</id>
    </interactant>
    <interactant intactId="EBI-12023934">
        <id>Q5MJ10</id>
        <label>SPANXN2</label>
    </interactant>
    <organismsDiffer>false</organismsDiffer>
    <experiments>3</experiments>
</comment>
<comment type="interaction">
    <interactant intactId="EBI-79165">
        <id>Q9NRD5</id>
    </interactant>
    <interactant intactId="EBI-11995806">
        <id>Q9H0A9-2</id>
        <label>SPATC1L</label>
    </interactant>
    <organismsDiffer>false</organismsDiffer>
    <experiments>3</experiments>
</comment>
<comment type="interaction">
    <interactant intactId="EBI-79165">
        <id>Q9NRD5</id>
    </interactant>
    <interactant intactId="EBI-12175897">
        <id>Q15772-4</id>
        <label>SPEG</label>
    </interactant>
    <organismsDiffer>false</organismsDiffer>
    <experiments>3</experiments>
</comment>
<comment type="interaction">
    <interactant intactId="EBI-79165">
        <id>Q9NRD5</id>
    </interactant>
    <interactant intactId="EBI-2515299">
        <id>O43805</id>
        <label>SSNA1</label>
    </interactant>
    <organismsDiffer>false</organismsDiffer>
    <experiments>3</experiments>
</comment>
<comment type="interaction">
    <interactant intactId="EBI-79165">
        <id>Q9NRD5</id>
    </interactant>
    <interactant intactId="EBI-10176124">
        <id>B7ZLI8</id>
        <label>STK19</label>
    </interactant>
    <organismsDiffer>false</organismsDiffer>
    <experiments>3</experiments>
</comment>
<comment type="interaction">
    <interactant intactId="EBI-79165">
        <id>Q9NRD5</id>
    </interactant>
    <interactant intactId="EBI-14280485">
        <id>Q13043-2</id>
        <label>STK4</label>
    </interactant>
    <organismsDiffer>false</organismsDiffer>
    <experiments>3</experiments>
</comment>
<comment type="interaction">
    <interactant intactId="EBI-79165">
        <id>Q9NRD5</id>
    </interactant>
    <interactant intactId="EBI-745392">
        <id>Q9BSW7</id>
        <label>SYT17</label>
    </interactant>
    <organismsDiffer>false</organismsDiffer>
    <experiments>3</experiments>
</comment>
<comment type="interaction">
    <interactant intactId="EBI-79165">
        <id>Q9NRD5</id>
    </interactant>
    <interactant intactId="EBI-8787464">
        <id>Q9NU19</id>
        <label>TBC1D22B</label>
    </interactant>
    <organismsDiffer>false</organismsDiffer>
    <experiments>3</experiments>
</comment>
<comment type="interaction">
    <interactant intactId="EBI-79165">
        <id>Q9NRD5</id>
    </interactant>
    <interactant intactId="EBI-3258000">
        <id>Q9P0N9</id>
        <label>TBC1D7</label>
    </interactant>
    <organismsDiffer>false</organismsDiffer>
    <experiments>3</experiments>
</comment>
<comment type="interaction">
    <interactant intactId="EBI-79165">
        <id>Q9NRD5</id>
    </interactant>
    <interactant intactId="EBI-710310">
        <id>Q15560</id>
        <label>TCEA2</label>
    </interactant>
    <organismsDiffer>false</organismsDiffer>
    <experiments>3</experiments>
</comment>
<comment type="interaction">
    <interactant intactId="EBI-79165">
        <id>Q9NRD5</id>
    </interactant>
    <interactant intactId="EBI-11955057">
        <id>Q8N8B7-2</id>
        <label>TCEANC</label>
    </interactant>
    <organismsDiffer>false</organismsDiffer>
    <experiments>3</experiments>
</comment>
<comment type="interaction">
    <interactant intactId="EBI-79165">
        <id>Q9NRD5</id>
    </interactant>
    <interactant intactId="EBI-5462748">
        <id>Q96MN5</id>
        <label>TCEANC2</label>
    </interactant>
    <organismsDiffer>false</organismsDiffer>
    <experiments>3</experiments>
</comment>
<comment type="interaction">
    <interactant intactId="EBI-79165">
        <id>Q9NRD5</id>
    </interactant>
    <interactant intactId="EBI-743494">
        <id>P48775</id>
        <label>TDO2</label>
    </interactant>
    <organismsDiffer>false</organismsDiffer>
    <experiments>3</experiments>
</comment>
<comment type="interaction">
    <interactant intactId="EBI-79165">
        <id>Q9NRD5</id>
    </interactant>
    <interactant intactId="EBI-12306161">
        <id>Q9BY14-2</id>
        <label>TEX101</label>
    </interactant>
    <organismsDiffer>false</organismsDiffer>
    <experiments>3</experiments>
</comment>
<comment type="interaction">
    <interactant intactId="EBI-79165">
        <id>Q9NRD5</id>
    </interactant>
    <interactant intactId="EBI-1105213">
        <id>Q9UBB9</id>
        <label>TFIP11</label>
    </interactant>
    <organismsDiffer>false</organismsDiffer>
    <experiments>3</experiments>
</comment>
<comment type="interaction">
    <interactant intactId="EBI-79165">
        <id>Q9NRD5</id>
    </interactant>
    <interactant intactId="EBI-3925505">
        <id>Q8TBB0</id>
        <label>THAP6</label>
    </interactant>
    <organismsDiffer>false</organismsDiffer>
    <experiments>6</experiments>
</comment>
<comment type="interaction">
    <interactant intactId="EBI-79165">
        <id>Q9NRD5</id>
    </interactant>
    <interactant intactId="EBI-741350">
        <id>Q9BT49</id>
        <label>THAP7</label>
    </interactant>
    <organismsDiffer>false</organismsDiffer>
    <experiments>3</experiments>
</comment>
<comment type="interaction">
    <interactant intactId="EBI-79165">
        <id>Q9NRD5</id>
    </interactant>
    <interactant intactId="EBI-11741437">
        <id>Q08117-2</id>
        <label>TLE5</label>
    </interactant>
    <organismsDiffer>false</organismsDiffer>
    <experiments>3</experiments>
</comment>
<comment type="interaction">
    <interactant intactId="EBI-79165">
        <id>Q9NRD5</id>
    </interactant>
    <interactant intactId="EBI-12344941">
        <id>Q9H1K6</id>
        <label>TLNRD1</label>
    </interactant>
    <organismsDiffer>false</organismsDiffer>
    <experiments>3</experiments>
</comment>
<comment type="interaction">
    <interactant intactId="EBI-79165">
        <id>Q9NRD5</id>
    </interactant>
    <interactant intactId="EBI-1642100">
        <id>P67936</id>
        <label>TPM4</label>
    </interactant>
    <organismsDiffer>false</organismsDiffer>
    <experiments>3</experiments>
</comment>
<comment type="interaction">
    <interactant intactId="EBI-79165">
        <id>Q9NRD5</id>
    </interactant>
    <interactant intactId="EBI-3650647">
        <id>Q9BUZ4</id>
        <label>TRAF4</label>
    </interactant>
    <organismsDiffer>false</organismsDiffer>
    <experiments>3</experiments>
</comment>
<comment type="interaction">
    <interactant intactId="EBI-79165">
        <id>Q9NRD5</id>
    </interactant>
    <interactant intactId="EBI-523498">
        <id>O00463</id>
        <label>TRAF5</label>
    </interactant>
    <organismsDiffer>false</organismsDiffer>
    <experiments>3</experiments>
</comment>
<comment type="interaction">
    <interactant intactId="EBI-79165">
        <id>Q9NRD5</id>
    </interactant>
    <interactant intactId="EBI-8787399">
        <id>Q96DX7</id>
        <label>TRIM44</label>
    </interactant>
    <organismsDiffer>false</organismsDiffer>
    <experiments>3</experiments>
</comment>
<comment type="interaction">
    <interactant intactId="EBI-79165">
        <id>Q9NRD5</id>
    </interactant>
    <interactant intactId="EBI-2130429">
        <id>Q9BYV2</id>
        <label>TRIM54</label>
    </interactant>
    <organismsDiffer>false</organismsDiffer>
    <experiments>3</experiments>
</comment>
<comment type="interaction">
    <interactant intactId="EBI-79165">
        <id>Q9NRD5</id>
    </interactant>
    <interactant intactId="EBI-11059915">
        <id>Q8N7C3</id>
        <label>TRIML2</label>
    </interactant>
    <organismsDiffer>false</organismsDiffer>
    <experiments>3</experiments>
</comment>
<comment type="interaction">
    <interactant intactId="EBI-79165">
        <id>Q9NRD5</id>
    </interactant>
    <interactant intactId="EBI-2515774">
        <id>Q8IZ69</id>
        <label>TRMT2A</label>
    </interactant>
    <organismsDiffer>false</organismsDiffer>
    <experiments>3</experiments>
</comment>
<comment type="interaction">
    <interactant intactId="EBI-79165">
        <id>Q9NRD5</id>
    </interactant>
    <interactant intactId="EBI-1047085">
        <id>Q92574</id>
        <label>TSC1</label>
    </interactant>
    <organismsDiffer>false</organismsDiffer>
    <experiments>2</experiments>
</comment>
<comment type="interaction">
    <interactant intactId="EBI-79165">
        <id>Q9NRD5</id>
    </interactant>
    <interactant intactId="EBI-396587">
        <id>P49815</id>
        <label>TSC2</label>
    </interactant>
    <organismsDiffer>false</organismsDiffer>
    <experiments>2</experiments>
</comment>
<comment type="interaction">
    <interactant intactId="EBI-79165">
        <id>Q9NRD5</id>
    </interactant>
    <interactant intactId="EBI-10241197">
        <id>Q3SY00</id>
        <label>TSGA10IP</label>
    </interactant>
    <organismsDiffer>false</organismsDiffer>
    <experiments>3</experiments>
</comment>
<comment type="interaction">
    <interactant intactId="EBI-79165">
        <id>Q9NRD5</id>
    </interactant>
    <interactant intactId="EBI-1044160">
        <id>Q15631</id>
        <label>TSN</label>
    </interactant>
    <organismsDiffer>false</organismsDiffer>
    <experiments>3</experiments>
</comment>
<comment type="interaction">
    <interactant intactId="EBI-79165">
        <id>Q9NRD5</id>
    </interactant>
    <interactant intactId="EBI-8994397">
        <id>Q5T7W7</id>
        <label>TSTD2</label>
    </interactant>
    <organismsDiffer>false</organismsDiffer>
    <experiments>3</experiments>
</comment>
<comment type="interaction">
    <interactant intactId="EBI-79165">
        <id>Q9NRD5</id>
    </interactant>
    <interactant intactId="EBI-9090990">
        <id>Q5W5X9-3</id>
        <label>TTC23</label>
    </interactant>
    <organismsDiffer>false</organismsDiffer>
    <experiments>3</experiments>
</comment>
<comment type="interaction">
    <interactant intactId="EBI-79165">
        <id>Q9NRD5</id>
    </interactant>
    <interactant intactId="EBI-8656864">
        <id>Q6PF05</id>
        <label>TTC23L</label>
    </interactant>
    <organismsDiffer>false</organismsDiffer>
    <experiments>3</experiments>
</comment>
<comment type="interaction">
    <interactant intactId="EBI-79165">
        <id>Q9NRD5</id>
    </interactant>
    <interactant intactId="EBI-707554">
        <id>O14530</id>
        <label>TXNDC9</label>
    </interactant>
    <organismsDiffer>false</organismsDiffer>
    <experiments>3</experiments>
</comment>
<comment type="interaction">
    <interactant intactId="EBI-79165">
        <id>Q9NRD5</id>
    </interactant>
    <interactant intactId="EBI-10309345">
        <id>Q9NX01</id>
        <label>TXNL4B</label>
    </interactant>
    <organismsDiffer>false</organismsDiffer>
    <experiments>3</experiments>
</comment>
<comment type="interaction">
    <interactant intactId="EBI-79165">
        <id>Q9NRD5</id>
    </interactant>
    <interactant intactId="EBI-10974426">
        <id>Q6IPR3</id>
        <label>TYW3</label>
    </interactant>
    <organismsDiffer>false</organismsDiffer>
    <experiments>3</experiments>
</comment>
<comment type="interaction">
    <interactant intactId="EBI-79165">
        <id>Q9NRD5</id>
    </interactant>
    <interactant intactId="EBI-350510">
        <id>Q9BZF9</id>
        <label>UACA</label>
    </interactant>
    <organismsDiffer>false</organismsDiffer>
    <experiments>4</experiments>
</comment>
<comment type="interaction">
    <interactant intactId="EBI-79165">
        <id>Q9NRD5</id>
    </interactant>
    <interactant intactId="EBI-348496">
        <id>Q969T4</id>
        <label>UBE2E3</label>
    </interactant>
    <organismsDiffer>false</organismsDiffer>
    <experiments>3</experiments>
</comment>
<comment type="interaction">
    <interactant intactId="EBI-79165">
        <id>Q9NRD5</id>
    </interactant>
    <interactant intactId="EBI-473850">
        <id>P61086</id>
        <label>UBE2K</label>
    </interactant>
    <organismsDiffer>false</organismsDiffer>
    <experiments>3</experiments>
</comment>
<comment type="interaction">
    <interactant intactId="EBI-79165">
        <id>Q9NRD5</id>
    </interactant>
    <interactant intactId="EBI-739895">
        <id>Q8N6Y0</id>
        <label>USHBP1</label>
    </interactant>
    <organismsDiffer>false</organismsDiffer>
    <experiments>3</experiments>
</comment>
<comment type="interaction">
    <interactant intactId="EBI-79165">
        <id>Q9NRD5</id>
    </interactant>
    <interactant intactId="EBI-743272">
        <id>O75604</id>
        <label>USP2</label>
    </interactant>
    <organismsDiffer>false</organismsDiffer>
    <experiments>3</experiments>
</comment>
<comment type="interaction">
    <interactant intactId="EBI-79165">
        <id>Q9NRD5</id>
    </interactant>
    <interactant intactId="EBI-714067">
        <id>Q9NQZ2</id>
        <label>UTP3</label>
    </interactant>
    <organismsDiffer>false</organismsDiffer>
    <experiments>3</experiments>
</comment>
<comment type="interaction">
    <interactant intactId="EBI-79165">
        <id>Q9NRD5</id>
    </interactant>
    <interactant intactId="EBI-12227803">
        <id>Q5SQQ9-2</id>
        <label>VAX1</label>
    </interactant>
    <organismsDiffer>false</organismsDiffer>
    <experiments>3</experiments>
</comment>
<comment type="interaction">
    <interactant intactId="EBI-79165">
        <id>Q9NRD5</id>
    </interactant>
    <interactant intactId="EBI-11980193">
        <id>Q14119</id>
        <label>VEZF1</label>
    </interactant>
    <organismsDiffer>false</organismsDiffer>
    <experiments>3</experiments>
</comment>
<comment type="interaction">
    <interactant intactId="EBI-79165">
        <id>Q9NRD5</id>
    </interactant>
    <interactant intactId="EBI-741945">
        <id>Q9BRG1</id>
        <label>VPS25</label>
    </interactant>
    <organismsDiffer>false</organismsDiffer>
    <experiments>3</experiments>
</comment>
<comment type="interaction">
    <interactant intactId="EBI-79165">
        <id>Q9NRD5</id>
    </interactant>
    <interactant intactId="EBI-11745701">
        <id>P19544-6</id>
        <label>WT1</label>
    </interactant>
    <organismsDiffer>false</organismsDiffer>
    <experiments>3</experiments>
</comment>
<comment type="interaction">
    <interactant intactId="EBI-79165">
        <id>Q9NRD5</id>
    </interactant>
    <interactant intactId="EBI-295222">
        <id>P23025</id>
        <label>XPA</label>
    </interactant>
    <organismsDiffer>false</organismsDiffer>
    <experiments>3</experiments>
</comment>
<comment type="interaction">
    <interactant intactId="EBI-79165">
        <id>Q9NRD5</id>
    </interactant>
    <interactant intactId="EBI-515331">
        <id>P07947</id>
        <label>YES1</label>
    </interactant>
    <organismsDiffer>false</organismsDiffer>
    <experiments>3</experiments>
</comment>
<comment type="interaction">
    <interactant intactId="EBI-79165">
        <id>Q9NRD5</id>
    </interactant>
    <interactant intactId="EBI-6658719">
        <id>Q96QA6</id>
        <label>YPEL2</label>
    </interactant>
    <organismsDiffer>false</organismsDiffer>
    <experiments>3</experiments>
</comment>
<comment type="interaction">
    <interactant intactId="EBI-79165">
        <id>Q9NRD5</id>
    </interactant>
    <interactant intactId="EBI-2849854">
        <id>Q96MU7</id>
        <label>YTHDC1</label>
    </interactant>
    <organismsDiffer>false</organismsDiffer>
    <experiments>3</experiments>
</comment>
<comment type="interaction">
    <interactant intactId="EBI-79165">
        <id>Q9NRD5</id>
    </interactant>
    <interactant intactId="EBI-740037">
        <id>O96006</id>
        <label>ZBED1</label>
    </interactant>
    <organismsDiffer>false</organismsDiffer>
    <experiments>3</experiments>
</comment>
<comment type="interaction">
    <interactant intactId="EBI-79165">
        <id>Q9NRD5</id>
    </interactant>
    <interactant intactId="EBI-2515601">
        <id>Q8N680</id>
        <label>ZBTB2</label>
    </interactant>
    <organismsDiffer>false</organismsDiffer>
    <experiments>3</experiments>
</comment>
<comment type="interaction">
    <interactant intactId="EBI-79165">
        <id>Q9NRD5</id>
    </interactant>
    <interactant intactId="EBI-744471">
        <id>O43167</id>
        <label>ZBTB24</label>
    </interactant>
    <organismsDiffer>false</organismsDiffer>
    <experiments>3</experiments>
</comment>
<comment type="interaction">
    <interactant intactId="EBI-79165">
        <id>Q9NRD5</id>
    </interactant>
    <interactant intactId="EBI-2859943">
        <id>Q6ZSB9</id>
        <label>ZBTB49</label>
    </interactant>
    <organismsDiffer>false</organismsDiffer>
    <experiments>3</experiments>
</comment>
<comment type="interaction">
    <interactant intactId="EBI-79165">
        <id>Q9NRD5</id>
    </interactant>
    <interactant intactId="EBI-10237226">
        <id>Q15911-2</id>
        <label>ZFHX3</label>
    </interactant>
    <organismsDiffer>false</organismsDiffer>
    <experiments>3</experiments>
</comment>
<comment type="interaction">
    <interactant intactId="EBI-79165">
        <id>Q9NRD5</id>
    </interactant>
    <interactant intactId="EBI-7236323">
        <id>Q6ZN57</id>
        <label>ZFP2</label>
    </interactant>
    <organismsDiffer>false</organismsDiffer>
    <experiments>3</experiments>
</comment>
<comment type="interaction">
    <interactant intactId="EBI-79165">
        <id>Q9NRD5</id>
    </interactant>
    <interactant intactId="EBI-1052613">
        <id>Q96JP5</id>
        <label>ZFP91</label>
    </interactant>
    <organismsDiffer>false</organismsDiffer>
    <experiments>3</experiments>
</comment>
<comment type="interaction">
    <interactant intactId="EBI-79165">
        <id>Q9NRD5</id>
    </interactant>
    <interactant intactId="EBI-2682299">
        <id>Q96NC0</id>
        <label>ZMAT2</label>
    </interactant>
    <organismsDiffer>false</organismsDiffer>
    <experiments>3</experiments>
</comment>
<comment type="interaction">
    <interactant intactId="EBI-79165">
        <id>Q9NRD5</id>
    </interactant>
    <interactant intactId="EBI-12030590">
        <id>Q9H0C1</id>
        <label>ZMYND12</label>
    </interactant>
    <organismsDiffer>false</organismsDiffer>
    <experiments>3</experiments>
</comment>
<comment type="interaction">
    <interactant intactId="EBI-79165">
        <id>Q9NRD5</id>
    </interactant>
    <interactant intactId="EBI-741694">
        <id>P49910</id>
        <label>ZNF165</label>
    </interactant>
    <organismsDiffer>false</organismsDiffer>
    <experiments>3</experiments>
</comment>
<comment type="interaction">
    <interactant intactId="EBI-79165">
        <id>Q9NRD5</id>
    </interactant>
    <interactant intactId="EBI-1105334">
        <id>P17021</id>
        <label>ZNF17</label>
    </interactant>
    <organismsDiffer>false</organismsDiffer>
    <experiments>3</experiments>
</comment>
<comment type="interaction">
    <interactant intactId="EBI-79165">
        <id>Q9NRD5</id>
    </interactant>
    <interactant intactId="EBI-747343">
        <id>O95201</id>
        <label>ZNF205</label>
    </interactant>
    <organismsDiffer>false</organismsDiffer>
    <experiments>3</experiments>
</comment>
<comment type="interaction">
    <interactant intactId="EBI-79165">
        <id>Q9NRD5</id>
    </interactant>
    <interactant intactId="EBI-10177272">
        <id>P15622-3</id>
        <label>ZNF250</label>
    </interactant>
    <organismsDiffer>false</organismsDiffer>
    <experiments>3</experiments>
</comment>
<comment type="interaction">
    <interactant intactId="EBI-79165">
        <id>Q9NRD5</id>
    </interactant>
    <interactant intactId="EBI-4395808">
        <id>O43296</id>
        <label>ZNF264</label>
    </interactant>
    <organismsDiffer>false</organismsDiffer>
    <experiments>3</experiments>
</comment>
<comment type="interaction">
    <interactant intactId="EBI-79165">
        <id>Q9NRD5</id>
    </interactant>
    <interactant intactId="EBI-750821">
        <id>Q8N554</id>
        <label>ZNF276</label>
    </interactant>
    <organismsDiffer>false</organismsDiffer>
    <experiments>3</experiments>
</comment>
<comment type="interaction">
    <interactant intactId="EBI-79165">
        <id>Q9NRD5</id>
    </interactant>
    <interactant intactId="EBI-10754950">
        <id>Q9HBT8</id>
        <label>ZNF286A</label>
    </interactant>
    <organismsDiffer>false</organismsDiffer>
    <experiments>3</experiments>
</comment>
<comment type="interaction">
    <interactant intactId="EBI-79165">
        <id>Q9NRD5</id>
    </interactant>
    <interactant intactId="EBI-7233259">
        <id>Q86UD4</id>
        <label>ZNF329</label>
    </interactant>
    <organismsDiffer>false</organismsDiffer>
    <experiments>3</experiments>
</comment>
<comment type="interaction">
    <interactant intactId="EBI-79165">
        <id>Q9NRD5</id>
    </interactant>
    <interactant intactId="EBI-373456">
        <id>Q9Y3S2</id>
        <label>ZNF330</label>
    </interactant>
    <organismsDiffer>false</organismsDiffer>
    <experiments>3</experiments>
</comment>
<comment type="interaction">
    <interactant intactId="EBI-79165">
        <id>Q9NRD5</id>
    </interactant>
    <interactant intactId="EBI-11041653">
        <id>P13682</id>
        <label>ZNF35</label>
    </interactant>
    <organismsDiffer>false</organismsDiffer>
    <experiments>3</experiments>
</comment>
<comment type="interaction">
    <interactant intactId="EBI-79165">
        <id>Q9NRD5</id>
    </interactant>
    <interactant intactId="EBI-347633">
        <id>Q9H9D4</id>
        <label>ZNF408</label>
    </interactant>
    <organismsDiffer>false</organismsDiffer>
    <experiments>3</experiments>
</comment>
<comment type="interaction">
    <interactant intactId="EBI-79165">
        <id>Q9NRD5</id>
    </interactant>
    <interactant intactId="EBI-11741890">
        <id>Q86VK4-3</id>
        <label>ZNF410</label>
    </interactant>
    <organismsDiffer>false</organismsDiffer>
    <experiments>3</experiments>
</comment>
<comment type="interaction">
    <interactant intactId="EBI-79165">
        <id>Q9NRD5</id>
    </interactant>
    <interactant intactId="EBI-744257">
        <id>Q96IQ9</id>
        <label>ZNF414</label>
    </interactant>
    <organismsDiffer>false</organismsDiffer>
    <experiments>3</experiments>
</comment>
<comment type="interaction">
    <interactant intactId="EBI-79165">
        <id>Q9NRD5</id>
    </interactant>
    <interactant intactId="EBI-740727">
        <id>Q8TAU3</id>
        <label>ZNF417</label>
    </interactant>
    <organismsDiffer>false</organismsDiffer>
    <experiments>3</experiments>
</comment>
<comment type="interaction">
    <interactant intactId="EBI-79165">
        <id>Q9NRD5</id>
    </interactant>
    <interactant intactId="EBI-11962468">
        <id>Q7Z4V0</id>
        <label>ZNF438</label>
    </interactant>
    <organismsDiffer>false</organismsDiffer>
    <experiments>3</experiments>
</comment>
<comment type="interaction">
    <interactant intactId="EBI-79165">
        <id>Q9NRD5</id>
    </interactant>
    <interactant intactId="EBI-10486136">
        <id>Q6ZNH5</id>
        <label>ZNF497</label>
    </interactant>
    <organismsDiffer>false</organismsDiffer>
    <experiments>3</experiments>
</comment>
<comment type="interaction">
    <interactant intactId="EBI-79165">
        <id>Q9NRD5</id>
    </interactant>
    <interactant intactId="EBI-10283126">
        <id>Q96C55</id>
        <label>ZNF524</label>
    </interactant>
    <organismsDiffer>false</organismsDiffer>
    <experiments>3</experiments>
</comment>
<comment type="interaction">
    <interactant intactId="EBI-79165">
        <id>Q9NRD5</id>
    </interactant>
    <interactant intactId="EBI-14069183">
        <id>Q86XF7</id>
        <label>ZNF575</label>
    </interactant>
    <organismsDiffer>false</organismsDiffer>
    <experiments>3</experiments>
</comment>
<comment type="interaction">
    <interactant intactId="EBI-79165">
        <id>Q9NRD5</id>
    </interactant>
    <interactant intactId="EBI-3921014">
        <id>Q9H609</id>
        <label>ZNF576</label>
    </interactant>
    <organismsDiffer>false</organismsDiffer>
    <experiments>3</experiments>
</comment>
<comment type="interaction">
    <interactant intactId="EBI-79165">
        <id>Q9NRD5</id>
    </interactant>
    <interactant intactId="EBI-726769">
        <id>O00488</id>
        <label>ZNF593</label>
    </interactant>
    <organismsDiffer>false</organismsDiffer>
    <experiments>3</experiments>
</comment>
<comment type="interaction">
    <interactant intactId="EBI-79165">
        <id>Q9NRD5</id>
    </interactant>
    <interactant intactId="EBI-9116427">
        <id>Q9P2J8</id>
        <label>ZNF624</label>
    </interactant>
    <organismsDiffer>false</organismsDiffer>
    <experiments>3</experiments>
</comment>
<comment type="interaction">
    <interactant intactId="EBI-79165">
        <id>Q9NRD5</id>
    </interactant>
    <interactant intactId="EBI-720883">
        <id>Q5VV52</id>
        <label>ZNF691</label>
    </interactant>
    <organismsDiffer>false</organismsDiffer>
    <experiments>3</experiments>
</comment>
<comment type="interaction">
    <interactant intactId="EBI-79165">
        <id>Q9NRD5</id>
    </interactant>
    <interactant intactId="EBI-7138235">
        <id>Q9NQZ8</id>
        <label>ZNF71</label>
    </interactant>
    <organismsDiffer>false</organismsDiffer>
    <experiments>3</experiments>
</comment>
<comment type="interaction">
    <interactant intactId="EBI-79165">
        <id>Q9NRD5</id>
    </interactant>
    <interactant intactId="EBI-745775">
        <id>Q96H86</id>
        <label>ZNF764</label>
    </interactant>
    <organismsDiffer>false</organismsDiffer>
    <experiments>3</experiments>
</comment>
<comment type="interaction">
    <interactant intactId="EBI-79165">
        <id>Q9NRD5</id>
    </interactant>
    <interactant intactId="EBI-10251462">
        <id>Q6NX45</id>
        <label>ZNF774</label>
    </interactant>
    <organismsDiffer>false</organismsDiffer>
    <experiments>3</experiments>
</comment>
<comment type="interaction">
    <interactant intactId="EBI-79165">
        <id>Q9NRD5</id>
    </interactant>
    <interactant intactId="EBI-10281938">
        <id>Q9Y5A6</id>
        <label>ZSCAN21</label>
    </interactant>
    <organismsDiffer>false</organismsDiffer>
    <experiments>3</experiments>
</comment>
<comment type="interaction">
    <interactant intactId="EBI-79165">
        <id>Q9NRD5</id>
    </interactant>
    <interactant intactId="EBI-5667532">
        <id>Q3MJ62</id>
        <label>ZSCAN23</label>
    </interactant>
    <organismsDiffer>false</organismsDiffer>
    <experiments>3</experiments>
</comment>
<comment type="interaction">
    <interactant intactId="EBI-79165">
        <id>Q9NRD5</id>
    </interactant>
    <interactant intactId="EBI-2795524">
        <id>Q8IYH5</id>
        <label>ZZZ3</label>
    </interactant>
    <organismsDiffer>false</organismsDiffer>
    <experiments>3</experiments>
</comment>
<comment type="subcellular location">
    <subcellularLocation>
        <location evidence="3">Cytoplasm</location>
        <location evidence="3">Perinuclear region</location>
    </subcellularLocation>
    <subcellularLocation>
        <location evidence="3">Membrane</location>
        <topology evidence="3">Peripheral membrane protein</topology>
    </subcellularLocation>
    <subcellularLocation>
        <location evidence="2">Membrane</location>
        <topology evidence="2">Lipid-anchor</topology>
    </subcellularLocation>
    <subcellularLocation>
        <location evidence="3">Postsynaptic density</location>
    </subcellularLocation>
    <subcellularLocation>
        <location evidence="3">Synapse</location>
        <location evidence="3">Synaptosome</location>
    </subcellularLocation>
    <subcellularLocation>
        <location evidence="3">Cytoplasm</location>
        <location evidence="3">Cytoskeleton</location>
    </subcellularLocation>
    <text evidence="3">Also membrane-associated, present at excitatory synapses.</text>
</comment>
<comment type="alternative products">
    <event type="alternative splicing"/>
    <isoform>
        <id>Q9NRD5-1</id>
        <name>1</name>
        <sequence type="displayed"/>
    </isoform>
    <isoform>
        <id>Q9NRD5-2</id>
        <name>2</name>
        <sequence type="described" ref="VSP_054902 VSP_054903"/>
    </isoform>
</comment>
<comment type="tissue specificity">
    <text>Ubiquitous.</text>
</comment>
<comment type="domain">
    <text evidence="1">The AH domain mediates binding to F-actin.</text>
</comment>
<comment type="domain">
    <text evidence="1">The unoccupied PDZ domain is probably involved in allosteric modulation by forming an intramolecular bridge with the AH domain leading to a 'closed' formation. Binding of a PDZ ligand, such as GRIA2, allows enhanced interactions with F-actin and the Arp2/3 complex thus enhanced inhibition of actin polymerization (By similarity).</text>
</comment>
<comment type="PTM">
    <text evidence="13">Phosphorylation at Thr-82 appears to inhibit the interaction with AMPA receptors.</text>
</comment>
<comment type="PTM">
    <text evidence="1">Palmitoylation on Cys-413 is essential for long-term synaptic depression (LTD).</text>
</comment>
<evidence type="ECO:0000250" key="1"/>
<evidence type="ECO:0000250" key="2">
    <source>
        <dbReference type="UniProtKB" id="Q62083"/>
    </source>
</evidence>
<evidence type="ECO:0000250" key="3">
    <source>
        <dbReference type="UniProtKB" id="Q9EP80"/>
    </source>
</evidence>
<evidence type="ECO:0000255" key="4">
    <source>
        <dbReference type="PROSITE-ProRule" id="PRU00143"/>
    </source>
</evidence>
<evidence type="ECO:0000255" key="5">
    <source>
        <dbReference type="PROSITE-ProRule" id="PRU00294"/>
    </source>
</evidence>
<evidence type="ECO:0000256" key="6">
    <source>
        <dbReference type="SAM" id="MobiDB-lite"/>
    </source>
</evidence>
<evidence type="ECO:0000269" key="7">
    <source>
    </source>
</evidence>
<evidence type="ECO:0000269" key="8">
    <source>
    </source>
</evidence>
<evidence type="ECO:0000269" key="9">
    <source>
    </source>
</evidence>
<evidence type="ECO:0000269" key="10">
    <source>
    </source>
</evidence>
<evidence type="ECO:0000269" key="11">
    <source>
    </source>
</evidence>
<evidence type="ECO:0000269" key="12">
    <source>
    </source>
</evidence>
<evidence type="ECO:0000269" key="13">
    <source>
    </source>
</evidence>
<evidence type="ECO:0000303" key="14">
    <source>
    </source>
</evidence>
<evidence type="ECO:0000305" key="15"/>
<evidence type="ECO:0007829" key="16">
    <source>
        <dbReference type="PDB" id="2GZV"/>
    </source>
</evidence>
<organism>
    <name type="scientific">Homo sapiens</name>
    <name type="common">Human</name>
    <dbReference type="NCBI Taxonomy" id="9606"/>
    <lineage>
        <taxon>Eukaryota</taxon>
        <taxon>Metazoa</taxon>
        <taxon>Chordata</taxon>
        <taxon>Craniata</taxon>
        <taxon>Vertebrata</taxon>
        <taxon>Euteleostomi</taxon>
        <taxon>Mammalia</taxon>
        <taxon>Eutheria</taxon>
        <taxon>Euarchontoglires</taxon>
        <taxon>Primates</taxon>
        <taxon>Haplorrhini</taxon>
        <taxon>Catarrhini</taxon>
        <taxon>Hominidae</taxon>
        <taxon>Homo</taxon>
    </lineage>
</organism>
<sequence length="415" mass="46600">MFADLDYDIEEDKLGIPTVPGKVTLQKDAQNLIGISIGGGAQYCPCLYIVQVFDNTPAALDGTVAAGDEITGVNGRSIKGKTKVEVAKMIQEVKGEVTIHYNKLQADPKQGMSLDIVLKKVKHRLVENMSSGTADALGLSRAILCNDGLVKRLEELERTAELYKGMTEHTKNLLRAFYELSQTHRAFGDVFSVIGVREPQPAASEAFVKFADAHRSIEKFGIRLLKTIKPMLTDLNTYLNKAIPDTRLTIKKYLDVKFEYLSYCLKVKEMDDEEYSCIALGEPLYRVSTGNYEYRLILRCRQEARARFSQMRKDVLEKMELLDQKHVQDIVFQLQRLVSTMSKYYNDCYAVLRDADVFPIEVDLAHTTLAYGLNQEEFTDGEEEEEEEDTAAGEPSRDTRGAAGPLDKGGSWCDS</sequence>
<gene>
    <name type="primary">PICK1</name>
    <name type="synonym">PRKCABP</name>
</gene>